<gene>
    <name type="primary">NF2</name>
    <name type="synonym">SCH</name>
</gene>
<feature type="chain" id="PRO_0000219412" description="Merlin">
    <location>
        <begin position="1"/>
        <end position="595"/>
    </location>
</feature>
<feature type="domain" description="FERM" evidence="2">
    <location>
        <begin position="22"/>
        <end position="311"/>
    </location>
</feature>
<feature type="modified residue" description="Phosphoserine" evidence="39">
    <location>
        <position position="13"/>
    </location>
</feature>
<feature type="modified residue" description="Phosphoserine; by PAK" evidence="38">
    <location>
        <position position="518"/>
    </location>
</feature>
<feature type="splice variant" id="VSP_007041" description="In isoform 4 and isoform 10." evidence="34 35 36">
    <location>
        <begin position="39"/>
        <end position="121"/>
    </location>
</feature>
<feature type="splice variant" id="VSP_007040" description="In isoform 6." evidence="35">
    <location>
        <begin position="39"/>
        <end position="80"/>
    </location>
</feature>
<feature type="splice variant" id="VSP_007042" description="In isoform 5." evidence="35">
    <location>
        <begin position="81"/>
        <end position="121"/>
    </location>
</feature>
<feature type="splice variant" id="VSP_007044" description="In isoform 9." evidence="34">
    <location>
        <begin position="150"/>
        <end position="579"/>
    </location>
</feature>
<feature type="splice variant" id="VSP_007043" description="In isoform 10." evidence="34">
    <location>
        <begin position="150"/>
        <end position="225"/>
    </location>
</feature>
<feature type="splice variant" id="VSP_007045" description="In isoform 7." evidence="34">
    <original>N</original>
    <variation>R</variation>
    <location>
        <position position="259"/>
    </location>
</feature>
<feature type="splice variant" id="VSP_007046" description="In isoform 7." evidence="34">
    <location>
        <begin position="260"/>
        <end position="595"/>
    </location>
</feature>
<feature type="splice variant" id="VSP_007047" description="In isoform 10." evidence="34">
    <original>MERQRLAREKQMREEAERTRDELERRLLQMKEEATMANEALMRSEE</original>
    <variation>GQRGRSAEAGPAGSTRGGAKSQAEAPGDCHQAHVPAHEPNSSTVAS</variation>
    <location>
        <begin position="334"/>
        <end position="379"/>
    </location>
</feature>
<feature type="splice variant" id="VSP_007048" description="In isoform 8." evidence="35">
    <location>
        <begin position="335"/>
        <end position="363"/>
    </location>
</feature>
<feature type="splice variant" id="VSP_007049" description="In isoform 10." evidence="34">
    <location>
        <begin position="380"/>
        <end position="595"/>
    </location>
</feature>
<feature type="splice variant" id="VSP_000492" description="In isoform 2." evidence="37">
    <original>LTLQSAKSRVAFFEEL</original>
    <variation>SSPRQKTYLHLSPQSRLFPGTLYVVMLYVVMVLPSVILTRA</variation>
    <location>
        <begin position="580"/>
        <end position="595"/>
    </location>
</feature>
<feature type="splice variant" id="VSP_007050" description="In isoform 3, isoform 4, isoform 5, isoform 6 and isoform 8." evidence="35 36">
    <original>LTLQSAKSRVA</original>
    <variation>PQAQGRRPICI</variation>
    <location>
        <begin position="580"/>
        <end position="590"/>
    </location>
</feature>
<feature type="splice variant" id="VSP_007051" description="In isoform 3, isoform 4, isoform 5, isoform 6 and isoform 8." evidence="35 36">
    <location>
        <begin position="591"/>
        <end position="595"/>
    </location>
</feature>
<feature type="sequence variant" id="VAR_000809" description="In vestibular schwannoma; loss of ability to interact with the CUL4A-RBX1-DDB1-VprBP/DCAF1 E3 ubiquitin-protein ligase complex." evidence="16 23">
    <original>L</original>
    <variation>R</variation>
    <location>
        <position position="46"/>
    </location>
</feature>
<feature type="sequence variant" id="VAR_000810" description="In SWNV; loss of ability to interact with the CUL4A-RBX1-DDB1-VprBP/DCAF1 E3 ubiquitin-protein ligase complex; dbSNP:rs121434261." evidence="5 16 25 33">
    <original>F</original>
    <variation>S</variation>
    <location>
        <position position="62"/>
    </location>
</feature>
<feature type="sequence variant" id="VAR_043011" description="In SWNV; dbSNP:rs2146854698." evidence="33">
    <original>M</original>
    <variation>V</variation>
    <location>
        <position position="77"/>
    </location>
</feature>
<feature type="sequence variant" id="VAR_000811" description="In vestibular schwannoma; dbSNP:rs2146854839." evidence="22">
    <original>K</original>
    <variation>E</variation>
    <location>
        <position position="79"/>
    </location>
</feature>
<feature type="sequence variant" id="VAR_000812" description="In SWNV; also found in sporadic meningioma." evidence="21 30">
    <location>
        <position position="96"/>
    </location>
</feature>
<feature type="sequence variant" id="VAR_000813" description="In SWNV." evidence="25 33">
    <original>E</original>
    <variation>G</variation>
    <location>
        <position position="106"/>
    </location>
</feature>
<feature type="sequence variant" id="VAR_000814" description="In sporadic meningioma; dbSNP:rs1569281810." evidence="30">
    <original>L</original>
    <variation>I</variation>
    <location>
        <position position="117"/>
    </location>
</feature>
<feature type="sequence variant" id="VAR_000815" description="In sporadic meningioma; no effect on interaction with SCHIP1." evidence="4 20 30">
    <location>
        <position position="119"/>
    </location>
</feature>
<feature type="sequence variant" id="VAR_000816" description="In sporadic meningioma." evidence="30">
    <location>
        <begin position="122"/>
        <end position="129"/>
    </location>
</feature>
<feature type="sequence variant" id="VAR_065227" description="In SWNV." evidence="17">
    <original>C</original>
    <variation>R</variation>
    <location>
        <position position="133"/>
    </location>
</feature>
<feature type="sequence variant" id="VAR_043012" description="In SWNV; loss of ability to interact with the CUL4A-RBX1-DDB1-VprBP/DCAF1 E3 ubiquitin-protein ligase complex; dbSNP:rs2146894322." evidence="8 16">
    <original>L</original>
    <variation>P</variation>
    <location>
        <position position="141"/>
    </location>
</feature>
<feature type="sequence variant" id="VAR_043013" description="In SWNV; dbSNP:rs2146973769." evidence="31">
    <original>G</original>
    <variation>C</variation>
    <location>
        <position position="197"/>
    </location>
</feature>
<feature type="sequence variant" id="VAR_000817" description="In vestibular schwannoma; changed interaction with SCHIP1; dbSNP:rs1555994816." evidence="4 24">
    <original>V</original>
    <variation>M</variation>
    <location>
        <position position="219"/>
    </location>
</feature>
<feature type="sequence variant" id="VAR_000818" description="In SWNV; dbSNP:rs1601618646." evidence="27">
    <original>N</original>
    <variation>Y</variation>
    <location>
        <position position="220"/>
    </location>
</feature>
<feature type="sequence variant" id="VAR_009123" description="In SWNV; also found in retinal hamartoma; severe." evidence="3">
    <original>L</original>
    <variation>R</variation>
    <location>
        <position position="234"/>
    </location>
</feature>
<feature type="sequence variant" id="VAR_000819" description="In breast ductal carcinoma." evidence="26">
    <original>I</original>
    <variation>F</variation>
    <location>
        <position position="273"/>
    </location>
</feature>
<feature type="sequence variant" id="VAR_000820" description="In sporadic meningioma; dbSNP:rs2147071489." evidence="30">
    <original>L</original>
    <variation>F</variation>
    <location>
        <position position="339"/>
    </location>
</feature>
<feature type="sequence variant" id="VAR_029041" description="In dbSNP:rs771675702." evidence="22">
    <original>R</original>
    <variation>H</variation>
    <location>
        <position position="351"/>
    </location>
</feature>
<feature type="sequence variant" id="VAR_000821" description="In SWNV; dbSNP:rs764441073." evidence="25 33">
    <original>T</original>
    <variation>M</variation>
    <location>
        <position position="352"/>
    </location>
</feature>
<feature type="sequence variant" id="VAR_000822" description="In SWNV; dbSNP:rs74315492." evidence="28">
    <original>L</original>
    <variation>P</variation>
    <location>
        <position position="360"/>
    </location>
</feature>
<feature type="sequence variant" id="VAR_000823" description="In melanoma; dbSNP:rs2147073490." evidence="26">
    <original>K</original>
    <variation>I</variation>
    <location>
        <position position="364"/>
    </location>
</feature>
<feature type="sequence variant" id="VAR_043014" description="In SWNV; dbSNP:rs766974263." evidence="20 33">
    <original>K</original>
    <variation>E</variation>
    <location>
        <position position="413"/>
    </location>
</feature>
<feature type="sequence variant" id="VAR_000824" description="In vestibular schwannoma; dbSNP:rs765540111." evidence="24">
    <original>R</original>
    <variation>C</variation>
    <location>
        <position position="418"/>
    </location>
</feature>
<feature type="sequence variant" id="VAR_035848" description="In a breast cancer sample; somatic mutation; dbSNP:rs74315503." evidence="11">
    <original>E</original>
    <variation>K</variation>
    <location>
        <position position="463"/>
    </location>
</feature>
<feature type="sequence variant" id="VAR_043015" description="In SWNV." evidence="5">
    <original>K</original>
    <variation>T</variation>
    <location>
        <position position="533"/>
    </location>
</feature>
<feature type="sequence variant" id="VAR_000825" description="In SWNV; dbSNP:rs74315493." evidence="19 20 33">
    <original>L</original>
    <variation>P</variation>
    <location>
        <position position="535"/>
    </location>
</feature>
<feature type="sequence variant" id="VAR_000826" description="In SWNV; dbSNP:rs74315494." evidence="29">
    <original>Q</original>
    <variation>P</variation>
    <location>
        <position position="538"/>
    </location>
</feature>
<feature type="sequence variant" id="VAR_043016" description="In SWNV; dbSNP:rs2147122672." evidence="31">
    <original>L</original>
    <variation>H</variation>
    <location>
        <position position="539"/>
    </location>
</feature>
<feature type="sequence variant" id="VAR_043017" description="In SWNV." evidence="5">
    <original>K</original>
    <variation>M</variation>
    <location>
        <position position="579"/>
    </location>
</feature>
<feature type="mutagenesis site" description="Abolishes binding to AGAP2 and interaction with the CUL4A-RBX1-DDB1-VprBP/DCAF1 E3 ubiquitin-protein ligase complex." evidence="10 16">
    <original>L</original>
    <variation>P</variation>
    <location>
        <position position="64"/>
    </location>
</feature>
<feature type="mutagenesis site" description="Loss of phosphorylation. Significant accumulation in the nucleus and no effect on binding to DCAF1." evidence="16">
    <original>S</original>
    <variation>A</variation>
    <location>
        <position position="518"/>
    </location>
</feature>
<feature type="mutagenesis site" description="No effect on phosphorylation. Defective nuclear accumulation. Significant decrease in binding to DCAF1 and in ability to inhibit cell proliferation." evidence="16">
    <original>S</original>
    <variation>D</variation>
    <location>
        <position position="518"/>
    </location>
</feature>
<feature type="sequence conflict" description="In Ref. 7; AAH20257." evidence="37" ref="7">
    <original>M</original>
    <variation>I</variation>
    <location>
        <position position="77"/>
    </location>
</feature>
<feature type="sequence conflict" description="In Ref. 5; AAK54160/AAK54162." evidence="37" ref="5">
    <original>T</original>
    <variation>P</variation>
    <location>
        <position position="581"/>
    </location>
</feature>
<feature type="strand" evidence="41">
    <location>
        <begin position="24"/>
        <end position="27"/>
    </location>
</feature>
<feature type="strand" evidence="41">
    <location>
        <begin position="32"/>
        <end position="35"/>
    </location>
</feature>
<feature type="helix" evidence="41">
    <location>
        <begin position="43"/>
        <end position="54"/>
    </location>
</feature>
<feature type="helix" evidence="41">
    <location>
        <begin position="59"/>
        <end position="61"/>
    </location>
</feature>
<feature type="strand" evidence="41">
    <location>
        <begin position="62"/>
        <end position="70"/>
    </location>
</feature>
<feature type="strand" evidence="41">
    <location>
        <begin position="72"/>
        <end position="74"/>
    </location>
</feature>
<feature type="strand" evidence="40">
    <location>
        <begin position="77"/>
        <end position="80"/>
    </location>
</feature>
<feature type="turn" evidence="41">
    <location>
        <begin position="81"/>
        <end position="83"/>
    </location>
</feature>
<feature type="strand" evidence="40">
    <location>
        <begin position="84"/>
        <end position="86"/>
    </location>
</feature>
<feature type="strand" evidence="41">
    <location>
        <begin position="90"/>
        <end position="100"/>
    </location>
</feature>
<feature type="helix" evidence="41">
    <location>
        <begin position="105"/>
        <end position="108"/>
    </location>
</feature>
<feature type="helix" evidence="41">
    <location>
        <begin position="112"/>
        <end position="127"/>
    </location>
</feature>
<feature type="helix" evidence="41">
    <location>
        <begin position="135"/>
        <end position="150"/>
    </location>
</feature>
<feature type="turn" evidence="41">
    <location>
        <begin position="155"/>
        <end position="157"/>
    </location>
</feature>
<feature type="turn" evidence="41">
    <location>
        <begin position="160"/>
        <end position="165"/>
    </location>
</feature>
<feature type="helix" evidence="41">
    <location>
        <begin position="171"/>
        <end position="174"/>
    </location>
</feature>
<feature type="helix" evidence="41">
    <location>
        <begin position="181"/>
        <end position="194"/>
    </location>
</feature>
<feature type="turn" evidence="41">
    <location>
        <begin position="195"/>
        <end position="197"/>
    </location>
</feature>
<feature type="helix" evidence="41">
    <location>
        <begin position="200"/>
        <end position="211"/>
    </location>
</feature>
<feature type="turn" evidence="41">
    <location>
        <begin position="215"/>
        <end position="218"/>
    </location>
</feature>
<feature type="strand" evidence="41">
    <location>
        <begin position="220"/>
        <end position="226"/>
    </location>
</feature>
<feature type="strand" evidence="41">
    <location>
        <begin position="231"/>
        <end position="236"/>
    </location>
</feature>
<feature type="strand" evidence="41">
    <location>
        <begin position="238"/>
        <end position="244"/>
    </location>
</feature>
<feature type="strand" evidence="41">
    <location>
        <begin position="249"/>
        <end position="251"/>
    </location>
</feature>
<feature type="strand" evidence="41">
    <location>
        <begin position="253"/>
        <end position="257"/>
    </location>
</feature>
<feature type="helix" evidence="41">
    <location>
        <begin position="258"/>
        <end position="260"/>
    </location>
</feature>
<feature type="strand" evidence="41">
    <location>
        <begin position="261"/>
        <end position="267"/>
    </location>
</feature>
<feature type="strand" evidence="41">
    <location>
        <begin position="270"/>
        <end position="277"/>
    </location>
</feature>
<feature type="strand" evidence="41">
    <location>
        <begin position="283"/>
        <end position="286"/>
    </location>
</feature>
<feature type="helix" evidence="41">
    <location>
        <begin position="290"/>
        <end position="309"/>
    </location>
</feature>
<feature type="helix" evidence="41">
    <location>
        <begin position="316"/>
        <end position="336"/>
    </location>
</feature>
<feature type="helix" evidence="40">
    <location>
        <begin position="513"/>
        <end position="547"/>
    </location>
</feature>
<feature type="helix" evidence="40">
    <location>
        <begin position="552"/>
        <end position="554"/>
    </location>
</feature>
<feature type="helix" evidence="40">
    <location>
        <begin position="557"/>
        <end position="562"/>
    </location>
</feature>
<feature type="helix" evidence="40">
    <location>
        <begin position="573"/>
        <end position="581"/>
    </location>
</feature>
<feature type="helix" evidence="40">
    <location>
        <begin position="585"/>
        <end position="594"/>
    </location>
</feature>
<sequence>MAGAIASRMSFSSLKRKQPKTFTVRIVTMDAEMEFNCEMKWKGKDLFDLVCRTLGLRETWFFGLQYTIKDTVAWLKMDKKVLDHDVSKEEPVTFHFLAKFYPENAEEELVQEITQHLFFLQVKKQILDEKIYCPPEASVLLASYAVQAKYGDYDPSVHKRGFLAQEELLPKRVINLYQMTPEMWEERITAWYAEHRGRARDEAEMEYLKIAQDLEMYGVNYFAIRNKKGTELLLGVDALGLHIYDPENRLTPKISFPWNEIRNISYSDKEFTIKPLDKKIDVFKFNSSKLRVNKLILQLCIGNHDLFMRRRKADSLEVQQMKAQAREEKARKQMERQRLAREKQMREEAERTRDELERRLLQMKEEATMANEALMRSEETADLLAEKAQITEEEAKLLAQKAAEAEQEMQRIKATAIRTEEEKRLMEQKVLEAEVLALKMAEESERRAKEADQLKQDLQEAREAERRAKQKLLEIATKPTYPPMNPIPAPLPPDIPSFNLIGDSLSFDFKDTDMKRLSMEIEKEKVEYMEKSKHLQEQLNELKTEIEALKLKERETALDILHNENSDRGGSSKHNTIKKLTLQSAKSRVAFFEEL</sequence>
<evidence type="ECO:0000250" key="1"/>
<evidence type="ECO:0000255" key="2">
    <source>
        <dbReference type="PROSITE-ProRule" id="PRU00084"/>
    </source>
</evidence>
<evidence type="ECO:0000269" key="3">
    <source>
    </source>
</evidence>
<evidence type="ECO:0000269" key="4">
    <source>
    </source>
</evidence>
<evidence type="ECO:0000269" key="5">
    <source>
    </source>
</evidence>
<evidence type="ECO:0000269" key="6">
    <source>
    </source>
</evidence>
<evidence type="ECO:0000269" key="7">
    <source>
    </source>
</evidence>
<evidence type="ECO:0000269" key="8">
    <source>
    </source>
</evidence>
<evidence type="ECO:0000269" key="9">
    <source>
    </source>
</evidence>
<evidence type="ECO:0000269" key="10">
    <source>
    </source>
</evidence>
<evidence type="ECO:0000269" key="11">
    <source>
    </source>
</evidence>
<evidence type="ECO:0000269" key="12">
    <source>
    </source>
</evidence>
<evidence type="ECO:0000269" key="13">
    <source>
    </source>
</evidence>
<evidence type="ECO:0000269" key="14">
    <source>
    </source>
</evidence>
<evidence type="ECO:0000269" key="15">
    <source>
    </source>
</evidence>
<evidence type="ECO:0000269" key="16">
    <source>
    </source>
</evidence>
<evidence type="ECO:0000269" key="17">
    <source>
    </source>
</evidence>
<evidence type="ECO:0000269" key="18">
    <source>
    </source>
</evidence>
<evidence type="ECO:0000269" key="19">
    <source>
    </source>
</evidence>
<evidence type="ECO:0000269" key="20">
    <source>
    </source>
</evidence>
<evidence type="ECO:0000269" key="21">
    <source>
    </source>
</evidence>
<evidence type="ECO:0000269" key="22">
    <source>
    </source>
</evidence>
<evidence type="ECO:0000269" key="23">
    <source>
    </source>
</evidence>
<evidence type="ECO:0000269" key="24">
    <source>
    </source>
</evidence>
<evidence type="ECO:0000269" key="25">
    <source>
    </source>
</evidence>
<evidence type="ECO:0000269" key="26">
    <source>
    </source>
</evidence>
<evidence type="ECO:0000269" key="27">
    <source>
    </source>
</evidence>
<evidence type="ECO:0000269" key="28">
    <source>
    </source>
</evidence>
<evidence type="ECO:0000269" key="29">
    <source>
    </source>
</evidence>
<evidence type="ECO:0000269" key="30">
    <source>
    </source>
</evidence>
<evidence type="ECO:0000269" key="31">
    <source>
    </source>
</evidence>
<evidence type="ECO:0000269" key="32">
    <source>
    </source>
</evidence>
<evidence type="ECO:0000269" key="33">
    <source>
    </source>
</evidence>
<evidence type="ECO:0000303" key="34">
    <source>
    </source>
</evidence>
<evidence type="ECO:0000303" key="35">
    <source>
    </source>
</evidence>
<evidence type="ECO:0000303" key="36">
    <source>
    </source>
</evidence>
<evidence type="ECO:0000305" key="37"/>
<evidence type="ECO:0007744" key="38">
    <source>
    </source>
</evidence>
<evidence type="ECO:0007744" key="39">
    <source>
    </source>
</evidence>
<evidence type="ECO:0007829" key="40">
    <source>
        <dbReference type="PDB" id="4ZRJ"/>
    </source>
</evidence>
<evidence type="ECO:0007829" key="41">
    <source>
        <dbReference type="PDB" id="7LWH"/>
    </source>
</evidence>
<proteinExistence type="evidence at protein level"/>
<comment type="function">
    <text evidence="14 16 18">Probable regulator of the Hippo/SWH (Sav/Wts/Hpo) signaling pathway, a signaling pathway that plays a pivotal role in tumor suppression by restricting proliferation and promoting apoptosis. Along with WWC1 can synergistically induce the phosphorylation of LATS1 and LATS2 and can probably function in the regulation of the Hippo/SWH (Sav/Wts/Hpo) signaling pathway. May act as a membrane stabilizing protein. May inhibit PI3 kinase by binding to AGAP2 and impairing its stimulating activity. Suppresses cell proliferation and tumorigenesis by inhibiting the CUL4A-RBX1-DDB1-VprBP/DCAF1 E3 ubiquitin-protein ligase complex.</text>
</comment>
<comment type="subunit">
    <text evidence="1 4 6 9 10 12 13 15 16 18 32">Interacts with NHERF1, HGS and AGAP2. Interacts with LAYN (By similarity). Interacts with SGSM3. Interacts (via FERM domain) with MPP1. Interacts with WWC1. Interacts with the CUL4A-RBX1-DDB1-VprBP/DCAF1 E3 ubiquitin-protein ligase complex. The unphosphorylated form interacts (via FERM domain) with VPRBP/DCAF1. Interacts (via FERM domain) with NOP53; the interaction is direct (PubMed:21167305). Interacts with SCHIP1; the interaction is direct (PubMed:10669747).</text>
</comment>
<comment type="interaction">
    <interactant intactId="EBI-1014472">
        <id>P35240</id>
    </interactant>
    <interactant intactId="EBI-16436655">
        <id>Q6H8Q1-8</id>
        <label>ABLIM2</label>
    </interactant>
    <organismsDiffer>false</organismsDiffer>
    <experiments>3</experiments>
</comment>
<comment type="interaction">
    <interactant intactId="EBI-1014472">
        <id>P35240</id>
    </interactant>
    <interactant intactId="EBI-2511319">
        <id>Q4VCS5</id>
        <label>AMOT</label>
    </interactant>
    <organismsDiffer>false</organismsDiffer>
    <experiments>10</experiments>
</comment>
<comment type="interaction">
    <interactant intactId="EBI-1014472">
        <id>P35240</id>
    </interactant>
    <interactant intactId="EBI-3903812">
        <id>Q4VCS5-1</id>
        <label>AMOT</label>
    </interactant>
    <organismsDiffer>false</organismsDiffer>
    <experiments>2</experiments>
</comment>
<comment type="interaction">
    <interactant intactId="EBI-1014472">
        <id>P35240</id>
    </interactant>
    <interactant intactId="EBI-3891843">
        <id>Q4VCS5-2</id>
        <label>AMOT</label>
    </interactant>
    <organismsDiffer>false</organismsDiffer>
    <experiments>6</experiments>
</comment>
<comment type="interaction">
    <interactant intactId="EBI-1014472">
        <id>P35240</id>
    </interactant>
    <interactant intactId="EBI-2410266">
        <id>Q8WXF7</id>
        <label>ATL1</label>
    </interactant>
    <organismsDiffer>false</organismsDiffer>
    <experiments>3</experiments>
</comment>
<comment type="interaction">
    <interactant intactId="EBI-1014472">
        <id>P35240</id>
    </interactant>
    <interactant intactId="EBI-350590">
        <id>Q9UNS2</id>
        <label>COPS3</label>
    </interactant>
    <organismsDiffer>false</organismsDiffer>
    <experiments>3</experiments>
</comment>
<comment type="interaction">
    <interactant intactId="EBI-1014472">
        <id>P35240</id>
    </interactant>
    <interactant intactId="EBI-25842815">
        <id>Q5TAQ9-2</id>
        <label>DCAF8</label>
    </interactant>
    <organismsDiffer>false</organismsDiffer>
    <experiments>3</experiments>
</comment>
<comment type="interaction">
    <interactant intactId="EBI-1014472">
        <id>P35240</id>
    </interactant>
    <interactant intactId="EBI-11132357">
        <id>O75530-2</id>
        <label>EED</label>
    </interactant>
    <organismsDiffer>false</organismsDiffer>
    <experiments>3</experiments>
</comment>
<comment type="interaction">
    <interactant intactId="EBI-1014472">
        <id>P35240</id>
    </interactant>
    <interactant intactId="EBI-8468186">
        <id>Q8IZU1</id>
        <label>FAM9A</label>
    </interactant>
    <organismsDiffer>false</organismsDiffer>
    <experiments>3</experiments>
</comment>
<comment type="interaction">
    <interactant intactId="EBI-1014472">
        <id>P35240</id>
    </interactant>
    <interactant intactId="EBI-1056249">
        <id>Q9BZE4</id>
        <label>GTPBP4</label>
    </interactant>
    <organismsDiffer>false</organismsDiffer>
    <experiments>9</experiments>
</comment>
<comment type="interaction">
    <interactant intactId="EBI-1014472">
        <id>P35240</id>
    </interactant>
    <interactant intactId="EBI-740220">
        <id>O14964</id>
        <label>HGS</label>
    </interactant>
    <organismsDiffer>false</organismsDiffer>
    <experiments>7</experiments>
</comment>
<comment type="interaction">
    <interactant intactId="EBI-1014472">
        <id>P35240</id>
    </interactant>
    <interactant intactId="EBI-710124">
        <id>O60341</id>
        <label>KDM1A</label>
    </interactant>
    <organismsDiffer>false</organismsDiffer>
    <experiments>4</experiments>
</comment>
<comment type="interaction">
    <interactant intactId="EBI-1014472">
        <id>P35240</id>
    </interactant>
    <interactant intactId="EBI-1049638">
        <id>Q14525</id>
        <label>KRT33B</label>
    </interactant>
    <organismsDiffer>false</organismsDiffer>
    <experiments>3</experiments>
</comment>
<comment type="interaction">
    <interactant intactId="EBI-1014472">
        <id>P35240</id>
    </interactant>
    <interactant intactId="EBI-444209">
        <id>O95835</id>
        <label>LATS1</label>
    </interactant>
    <organismsDiffer>false</organismsDiffer>
    <experiments>4</experiments>
</comment>
<comment type="interaction">
    <interactant intactId="EBI-1014472">
        <id>P35240</id>
    </interactant>
    <interactant intactId="EBI-739832">
        <id>Q8TBB1</id>
        <label>LNX1</label>
    </interactant>
    <organismsDiffer>false</organismsDiffer>
    <experiments>3</experiments>
</comment>
<comment type="interaction">
    <interactant intactId="EBI-1014472">
        <id>P35240</id>
    </interactant>
    <interactant intactId="EBI-49961">
        <id>Q16584</id>
        <label>MAP3K11</label>
    </interactant>
    <organismsDiffer>false</organismsDiffer>
    <experiments>4</experiments>
</comment>
<comment type="interaction">
    <interactant intactId="EBI-1014472">
        <id>P35240</id>
    </interactant>
    <interactant intactId="EBI-514199">
        <id>Q9H204</id>
        <label>MED28</label>
    </interactant>
    <organismsDiffer>false</organismsDiffer>
    <experiments>4</experiments>
</comment>
<comment type="interaction">
    <interactant intactId="EBI-1014472">
        <id>P35240</id>
    </interactant>
    <interactant intactId="EBI-2880203">
        <id>O76041</id>
        <label>NEBL</label>
    </interactant>
    <organismsDiffer>false</organismsDiffer>
    <experiments>3</experiments>
</comment>
<comment type="interaction">
    <interactant intactId="EBI-1014472">
        <id>P35240</id>
    </interactant>
    <interactant intactId="EBI-25842707">
        <id>Q6X4W1-6</id>
        <label>NSMF</label>
    </interactant>
    <organismsDiffer>false</organismsDiffer>
    <experiments>3</experiments>
</comment>
<comment type="interaction">
    <interactant intactId="EBI-1014472">
        <id>P35240</id>
    </interactant>
    <interactant intactId="EBI-724390">
        <id>Q8NI35</id>
        <label>PATJ</label>
    </interactant>
    <organismsDiffer>false</organismsDiffer>
    <experiments>2</experiments>
</comment>
<comment type="interaction">
    <interactant intactId="EBI-1014472">
        <id>P35240</id>
    </interactant>
    <interactant intactId="EBI-629434">
        <id>O75925</id>
        <label>PIAS1</label>
    </interactant>
    <organismsDiffer>false</organismsDiffer>
    <experiments>3</experiments>
</comment>
<comment type="interaction">
    <interactant intactId="EBI-1014472">
        <id>P35240</id>
    </interactant>
    <interactant intactId="EBI-10232538">
        <id>Q8WWB5</id>
        <label>PIH1D2</label>
    </interactant>
    <organismsDiffer>false</organismsDiffer>
    <experiments>3</experiments>
</comment>
<comment type="interaction">
    <interactant intactId="EBI-1014472">
        <id>P35240</id>
    </interactant>
    <interactant intactId="EBI-12891828">
        <id>Q6ZR37</id>
        <label>PLEKHG7</label>
    </interactant>
    <organismsDiffer>false</organismsDiffer>
    <experiments>3</experiments>
</comment>
<comment type="interaction">
    <interactant intactId="EBI-1014472">
        <id>P35240</id>
    </interactant>
    <interactant intactId="EBI-10181525">
        <id>Q6ZNE9</id>
        <label>RUFY4</label>
    </interactant>
    <organismsDiffer>false</organismsDiffer>
    <experiments>3</experiments>
</comment>
<comment type="interaction">
    <interactant intactId="EBI-1014472">
        <id>P35240</id>
    </interactant>
    <interactant intactId="EBI-25837959">
        <id>Q9BY12-3</id>
        <label>SCAPER</label>
    </interactant>
    <organismsDiffer>false</organismsDiffer>
    <experiments>3</experiments>
</comment>
<comment type="interaction">
    <interactant intactId="EBI-1014472">
        <id>P35240</id>
    </interactant>
    <interactant intactId="EBI-632715">
        <id>Q13573</id>
        <label>SNW1</label>
    </interactant>
    <organismsDiffer>false</organismsDiffer>
    <experiments>3</experiments>
</comment>
<comment type="interaction">
    <interactant intactId="EBI-1014472">
        <id>P35240</id>
    </interactant>
    <interactant intactId="EBI-357085">
        <id>Q9UNE7</id>
        <label>STUB1</label>
    </interactant>
    <organismsDiffer>false</organismsDiffer>
    <experiments>3</experiments>
</comment>
<comment type="interaction">
    <interactant intactId="EBI-1014472">
        <id>P35240</id>
    </interactant>
    <interactant intactId="EBI-711018">
        <id>P54274-2</id>
        <label>TERF1</label>
    </interactant>
    <organismsDiffer>false</organismsDiffer>
    <experiments>3</experiments>
</comment>
<comment type="interaction">
    <interactant intactId="EBI-1014472">
        <id>P35240</id>
    </interactant>
    <interactant intactId="EBI-2509913">
        <id>Q96KP6</id>
        <label>TNIP3</label>
    </interactant>
    <organismsDiffer>false</organismsDiffer>
    <experiments>3</experiments>
</comment>
<comment type="interaction">
    <interactant intactId="EBI-1014472">
        <id>P35240</id>
    </interactant>
    <interactant intactId="EBI-11525489">
        <id>Q86WT6-2</id>
        <label>TRIM69</label>
    </interactant>
    <organismsDiffer>false</organismsDiffer>
    <experiments>3</experiments>
</comment>
<comment type="interaction">
    <interactant intactId="EBI-1014472">
        <id>P35240</id>
    </interactant>
    <interactant intactId="EBI-21353855">
        <id>Q99598</id>
        <label>TSNAX</label>
    </interactant>
    <organismsDiffer>false</organismsDiffer>
    <experiments>3</experiments>
</comment>
<comment type="interaction">
    <interactant intactId="EBI-1014472">
        <id>P35240</id>
    </interactant>
    <interactant intactId="EBI-9088812">
        <id>Q5VYS8-5</id>
        <label>TUT7</label>
    </interactant>
    <organismsDiffer>false</organismsDiffer>
    <experiments>3</experiments>
</comment>
<comment type="interaction">
    <interactant intactId="EBI-1014472">
        <id>P35240</id>
    </interactant>
    <interactant intactId="EBI-2850578">
        <id>Q8NEZ2</id>
        <label>VPS37A</label>
    </interactant>
    <organismsDiffer>false</organismsDiffer>
    <experiments>3</experiments>
</comment>
<comment type="interaction">
    <interactant intactId="EBI-1014472">
        <id>P35240</id>
    </interactant>
    <interactant intactId="EBI-2602314">
        <id>Q15776</id>
        <label>ZKSCAN8</label>
    </interactant>
    <organismsDiffer>false</organismsDiffer>
    <experiments>3</experiments>
</comment>
<comment type="interaction">
    <interactant intactId="EBI-1014472">
        <id>P35240</id>
    </interactant>
    <interactant intactId="EBI-717634">
        <id>P17024</id>
        <label>ZNF20</label>
    </interactant>
    <organismsDiffer>false</organismsDiffer>
    <experiments>3</experiments>
</comment>
<comment type="interaction">
    <interactant intactId="EBI-1014472">
        <id>P35240</id>
    </interactant>
    <interactant intactId="EBI-8489702">
        <id>Q9C0F3</id>
        <label>ZNF436</label>
    </interactant>
    <organismsDiffer>false</organismsDiffer>
    <experiments>3</experiments>
</comment>
<comment type="interaction">
    <interactant intactId="EBI-1014472">
        <id>P35240</id>
    </interactant>
    <interactant intactId="EBI-10486136">
        <id>Q6ZNH5</id>
        <label>ZNF497</label>
    </interactant>
    <organismsDiffer>false</organismsDiffer>
    <experiments>3</experiments>
</comment>
<comment type="interaction">
    <interactant intactId="EBI-1014472">
        <id>P35240</id>
    </interactant>
    <interactant intactId="EBI-10172590">
        <id>Q7Z3I7</id>
        <label>ZNF572</label>
    </interactant>
    <organismsDiffer>false</organismsDiffer>
    <experiments>3</experiments>
</comment>
<comment type="interaction">
    <interactant intactId="EBI-1014472">
        <id>P35240</id>
    </interactant>
    <interactant intactId="EBI-918263">
        <id>Q10728</id>
        <label>Ppp1r12a</label>
    </interactant>
    <organismsDiffer>true</organismsDiffer>
    <experiments>2</experiments>
</comment>
<comment type="interaction">
    <interactant intactId="EBI-1014472">
        <id>P35240</id>
    </interactant>
    <interactant intactId="EBI-1397475">
        <id>P0DPB4</id>
        <label>Schip1</label>
    </interactant>
    <organismsDiffer>true</organismsDiffer>
    <experiments>2</experiments>
</comment>
<comment type="interaction">
    <interactant intactId="EBI-1014500">
        <id>P35240-1</id>
    </interactant>
    <interactant intactId="EBI-21239519">
        <id>O14964-1</id>
        <label>HGS</label>
    </interactant>
    <organismsDiffer>false</organismsDiffer>
    <experiments>3</experiments>
</comment>
<comment type="interaction">
    <interactant intactId="EBI-1014500">
        <id>P35240-1</id>
    </interactant>
    <interactant intactId="EBI-514199">
        <id>Q9H204</id>
        <label>MED28</label>
    </interactant>
    <organismsDiffer>false</organismsDiffer>
    <experiments>2</experiments>
</comment>
<comment type="interaction">
    <interactant intactId="EBI-1014500">
        <id>P35240-1</id>
    </interactant>
    <interactant intactId="EBI-349787">
        <id>O14745</id>
        <label>NHERF1</label>
    </interactant>
    <organismsDiffer>false</organismsDiffer>
    <experiments>4</experiments>
</comment>
<comment type="interaction">
    <interactant intactId="EBI-1014500">
        <id>P35240-1</id>
    </interactant>
    <interactant intactId="EBI-34579487">
        <id>A0A8C0SSK1</id>
        <label>AMOT</label>
    </interactant>
    <organismsDiffer>true</organismsDiffer>
    <experiments>2</experiments>
</comment>
<comment type="interaction">
    <interactant intactId="EBI-1014500">
        <id>P35240-1</id>
    </interactant>
    <interactant intactId="EBI-34579469">
        <id>A0A8I3RSA7</id>
        <label>PARD3</label>
    </interactant>
    <organismsDiffer>true</organismsDiffer>
    <experiments>2</experiments>
</comment>
<comment type="interaction">
    <interactant intactId="EBI-1014509">
        <id>P35240-3</id>
    </interactant>
    <interactant intactId="EBI-21581128">
        <id>O14964-2</id>
        <label>HGS</label>
    </interactant>
    <organismsDiffer>false</organismsDiffer>
    <experiments>5</experiments>
</comment>
<comment type="interaction">
    <interactant intactId="EBI-1014509">
        <id>P35240-3</id>
    </interactant>
    <interactant intactId="EBI-351561">
        <id>Q01082</id>
        <label>SPTBN1</label>
    </interactant>
    <organismsDiffer>false</organismsDiffer>
    <experiments>4</experiments>
</comment>
<comment type="interaction">
    <interactant intactId="EBI-1014514">
        <id>P35240-4</id>
    </interactant>
    <interactant intactId="EBI-17286414">
        <id>A2BDD9</id>
        <label>AMOT</label>
    </interactant>
    <organismsDiffer>false</organismsDiffer>
    <experiments>3</experiments>
</comment>
<comment type="interaction">
    <interactant intactId="EBI-1014514">
        <id>P35240-4</id>
    </interactant>
    <interactant intactId="EBI-746752">
        <id>Q9Y2J4</id>
        <label>AMOTL2</label>
    </interactant>
    <organismsDiffer>false</organismsDiffer>
    <experiments>3</experiments>
</comment>
<comment type="interaction">
    <interactant intactId="EBI-1014514">
        <id>P35240-4</id>
    </interactant>
    <interactant intactId="EBI-25843552">
        <id>Q96DX5-3</id>
        <label>ASB9</label>
    </interactant>
    <organismsDiffer>false</organismsDiffer>
    <experiments>3</experiments>
</comment>
<comment type="interaction">
    <interactant intactId="EBI-1014514">
        <id>P35240-4</id>
    </interactant>
    <interactant intactId="EBI-10243741">
        <id>Q5H9J7</id>
        <label>BEX5</label>
    </interactant>
    <organismsDiffer>false</organismsDiffer>
    <experiments>3</experiments>
</comment>
<comment type="interaction">
    <interactant intactId="EBI-1014514">
        <id>P35240-4</id>
    </interactant>
    <interactant intactId="EBI-358049">
        <id>Q13895</id>
        <label>BYSL</label>
    </interactant>
    <organismsDiffer>false</organismsDiffer>
    <experiments>3</experiments>
</comment>
<comment type="interaction">
    <interactant intactId="EBI-1014514">
        <id>P35240-4</id>
    </interactant>
    <interactant intactId="EBI-744027">
        <id>Q13191</id>
        <label>CBLB</label>
    </interactant>
    <organismsDiffer>false</organismsDiffer>
    <experiments>3</experiments>
</comment>
<comment type="interaction">
    <interactant intactId="EBI-1014514">
        <id>P35240-4</id>
    </interactant>
    <interactant intactId="EBI-9087876">
        <id>P48730-2</id>
        <label>CSNK1D</label>
    </interactant>
    <organismsDiffer>false</organismsDiffer>
    <experiments>3</experiments>
</comment>
<comment type="interaction">
    <interactant intactId="EBI-1014514">
        <id>P35240-4</id>
    </interactant>
    <interactant intactId="EBI-711990">
        <id>O00303</id>
        <label>EIF3F</label>
    </interactant>
    <organismsDiffer>false</organismsDiffer>
    <experiments>3</experiments>
</comment>
<comment type="interaction">
    <interactant intactId="EBI-1014514">
        <id>P35240-4</id>
    </interactant>
    <interactant intactId="EBI-489887">
        <id>P50402</id>
        <label>EMD</label>
    </interactant>
    <organismsDiffer>false</organismsDiffer>
    <experiments>3</experiments>
</comment>
<comment type="interaction">
    <interactant intactId="EBI-1014514">
        <id>P35240-4</id>
    </interactant>
    <interactant intactId="EBI-11748557">
        <id>Q9Y6C2-2</id>
        <label>EMILIN1</label>
    </interactant>
    <organismsDiffer>false</organismsDiffer>
    <experiments>3</experiments>
</comment>
<comment type="interaction">
    <interactant intactId="EBI-1014514">
        <id>P35240-4</id>
    </interactant>
    <interactant intactId="EBI-8468186">
        <id>Q8IZU1</id>
        <label>FAM9A</label>
    </interactant>
    <organismsDiffer>false</organismsDiffer>
    <experiments>3</experiments>
</comment>
<comment type="interaction">
    <interactant intactId="EBI-1014514">
        <id>P35240-4</id>
    </interactant>
    <interactant intactId="EBI-740220">
        <id>O14964</id>
        <label>HGS</label>
    </interactant>
    <organismsDiffer>false</organismsDiffer>
    <experiments>4</experiments>
</comment>
<comment type="interaction">
    <interactant intactId="EBI-1014514">
        <id>P35240-4</id>
    </interactant>
    <interactant intactId="EBI-2512452">
        <id>Q8N594</id>
        <label>MPND</label>
    </interactant>
    <organismsDiffer>false</organismsDiffer>
    <experiments>3</experiments>
</comment>
<comment type="interaction">
    <interactant intactId="EBI-1014514">
        <id>P35240-4</id>
    </interactant>
    <interactant intactId="EBI-18577082">
        <id>O15381-5</id>
        <label>NVL</label>
    </interactant>
    <organismsDiffer>false</organismsDiffer>
    <experiments>3</experiments>
</comment>
<comment type="interaction">
    <interactant intactId="EBI-1014514">
        <id>P35240-4</id>
    </interactant>
    <interactant intactId="EBI-1058491">
        <id>Q96FW1</id>
        <label>OTUB1</label>
    </interactant>
    <organismsDiffer>false</organismsDiffer>
    <experiments>3</experiments>
</comment>
<comment type="interaction">
    <interactant intactId="EBI-1014514">
        <id>P35240-4</id>
    </interactant>
    <interactant intactId="EBI-25830200">
        <id>Q6GQQ9-2</id>
        <label>OTUD7B</label>
    </interactant>
    <organismsDiffer>false</organismsDiffer>
    <experiments>3</experiments>
</comment>
<comment type="interaction">
    <interactant intactId="EBI-1014514">
        <id>P35240-4</id>
    </interactant>
    <interactant intactId="EBI-629434">
        <id>O75925</id>
        <label>PIAS1</label>
    </interactant>
    <organismsDiffer>false</organismsDiffer>
    <experiments>3</experiments>
</comment>
<comment type="interaction">
    <interactant intactId="EBI-1014514">
        <id>P35240-4</id>
    </interactant>
    <interactant intactId="EBI-749039">
        <id>Q8WVD3</id>
        <label>RNF138</label>
    </interactant>
    <organismsDiffer>false</organismsDiffer>
    <experiments>3</experiments>
</comment>
<comment type="interaction">
    <interactant intactId="EBI-1014514">
        <id>P35240-4</id>
    </interactant>
    <interactant intactId="EBI-743938">
        <id>Q96D59</id>
        <label>RNF183</label>
    </interactant>
    <organismsDiffer>false</organismsDiffer>
    <experiments>3</experiments>
</comment>
<comment type="interaction">
    <interactant intactId="EBI-1014514">
        <id>P35240-4</id>
    </interactant>
    <interactant intactId="EBI-752324">
        <id>Q8N488</id>
        <label>RYBP</label>
    </interactant>
    <organismsDiffer>false</organismsDiffer>
    <experiments>3</experiments>
</comment>
<comment type="interaction">
    <interactant intactId="EBI-1014514">
        <id>P35240-4</id>
    </interactant>
    <interactant intactId="EBI-79819">
        <id>P60896</id>
        <label>SEM1</label>
    </interactant>
    <organismsDiffer>false</organismsDiffer>
    <experiments>3</experiments>
</comment>
<comment type="interaction">
    <interactant intactId="EBI-1014514">
        <id>P35240-4</id>
    </interactant>
    <interactant intactId="EBI-7067260">
        <id>Q8NHS9</id>
        <label>SPATA22</label>
    </interactant>
    <organismsDiffer>false</organismsDiffer>
    <experiments>3</experiments>
</comment>
<comment type="interaction">
    <interactant intactId="EBI-1014514">
        <id>P35240-4</id>
    </interactant>
    <interactant intactId="EBI-6116822">
        <id>Q8N3L3</id>
        <label>TXLNB</label>
    </interactant>
    <organismsDiffer>false</organismsDiffer>
    <experiments>3</experiments>
</comment>
<comment type="interaction">
    <interactant intactId="EBI-1014514">
        <id>P35240-4</id>
    </interactant>
    <interactant intactId="EBI-12157263">
        <id>P40337-2</id>
        <label>VHL</label>
    </interactant>
    <organismsDiffer>false</organismsDiffer>
    <experiments>3</experiments>
</comment>
<comment type="interaction">
    <interactant intactId="EBI-1014514">
        <id>P35240-4</id>
    </interactant>
    <interactant intactId="EBI-2850578">
        <id>Q8NEZ2</id>
        <label>VPS37A</label>
    </interactant>
    <organismsDiffer>false</organismsDiffer>
    <experiments>3</experiments>
</comment>
<comment type="interaction">
    <interactant intactId="EBI-1014514">
        <id>P35240-4</id>
    </interactant>
    <interactant intactId="EBI-6427899">
        <id>P58304</id>
        <label>VSX2</label>
    </interactant>
    <organismsDiffer>false</organismsDiffer>
    <experiments>3</experiments>
</comment>
<comment type="subcellular location">
    <molecule>Isoform 1</molecule>
    <subcellularLocation>
        <location>Cell projection</location>
        <location>Filopodium membrane</location>
        <topology>Peripheral membrane protein</topology>
        <orientation>Cytoplasmic side</orientation>
    </subcellularLocation>
    <subcellularLocation>
        <location>Cell projection</location>
        <location>Ruffle membrane</location>
        <topology>Peripheral membrane protein</topology>
        <orientation>Cytoplasmic side</orientation>
    </subcellularLocation>
    <subcellularLocation>
        <location>Nucleus</location>
    </subcellularLocation>
    <text>In a fibroblastic cell line, isoform 1 is found homogeneously distributed over the entire cell, with a particularly strong staining in ruffling membranes and filopodia. Colocalizes with MPP1 in non-myelin-forming Schwann cells. Binds with DCAF1 in the nucleus. The intramolecular association of the FERM domain with the C-terminal tail promotes nuclear accumulation. The unphosphorylated form accumulates predominantly in the nucleus while the phosphorylated form is largely confined to the non-nuclear fractions.</text>
</comment>
<comment type="subcellular location">
    <molecule>Isoform 7</molecule>
    <subcellularLocation>
        <location>Cytoplasm</location>
        <location>Perinuclear region</location>
    </subcellularLocation>
    <subcellularLocation>
        <location>Cytoplasmic granule</location>
    </subcellularLocation>
    <text>Observed in cytoplasmic granules concentrated in a perinuclear location. Isoform 7 is absent from ruffling membranes and filopodia.</text>
</comment>
<comment type="subcellular location">
    <molecule>Isoform 9</molecule>
    <subcellularLocation>
        <location>Cytoplasm</location>
        <location>Perinuclear region</location>
    </subcellularLocation>
    <subcellularLocation>
        <location>Cytoplasmic granule</location>
    </subcellularLocation>
    <text>Observed in cytoplasmic granules concentrated in a perinuclear location. Isoform 9 is absent from ruffling membranes and filopodia.</text>
</comment>
<comment type="subcellular location">
    <molecule>Isoform 10</molecule>
    <subcellularLocation>
        <location>Nucleus</location>
    </subcellularLocation>
    <subcellularLocation>
        <location>Cell projection</location>
        <location>Filopodium membrane</location>
        <topology>Peripheral membrane protein</topology>
        <orientation>Cytoplasmic side</orientation>
    </subcellularLocation>
    <subcellularLocation>
        <location>Cell projection</location>
        <location>Ruffle membrane</location>
        <topology>Peripheral membrane protein</topology>
        <orientation>Cytoplasmic side</orientation>
    </subcellularLocation>
    <subcellularLocation>
        <location>Cytoplasm</location>
        <location>Perinuclear region</location>
    </subcellularLocation>
    <subcellularLocation>
        <location>Cytoplasmic granule</location>
    </subcellularLocation>
    <subcellularLocation>
        <location>Cytoplasm</location>
        <location>Cytoskeleton</location>
    </subcellularLocation>
    <text>In a fibroblastic cell line, isoform 10 is found homogeneously distributed over the entire cell, with a particularly strong staining in ruffling membranes and filopodia.</text>
</comment>
<comment type="alternative products">
    <event type="alternative splicing"/>
    <isoform>
        <id>P35240-1</id>
        <name>1</name>
        <name>I</name>
        <sequence type="displayed"/>
    </isoform>
    <isoform>
        <id>P35240-2</id>
        <name>2</name>
        <sequence type="described" ref="VSP_000492"/>
    </isoform>
    <isoform>
        <id>P35240-3</id>
        <name>3</name>
        <name>II</name>
        <sequence type="described" ref="VSP_007050 VSP_007051"/>
    </isoform>
    <isoform>
        <id>P35240-4</id>
        <name>4</name>
        <name>delE2/3</name>
        <sequence type="described" ref="VSP_007041 VSP_007050 VSP_007051"/>
    </isoform>
    <isoform>
        <id>P35240-5</id>
        <name>5</name>
        <name>delE3</name>
        <sequence type="described" ref="VSP_007042 VSP_007050 VSP_007051"/>
    </isoform>
    <isoform>
        <id>P35240-6</id>
        <name>6</name>
        <name>delE2</name>
        <sequence type="described" ref="VSP_007040 VSP_007050 VSP_007051"/>
    </isoform>
    <isoform>
        <id>P35240-7</id>
        <name>7</name>
        <name>MER150</name>
        <sequence type="described" ref="VSP_007045 VSP_007046"/>
    </isoform>
    <isoform>
        <id>P35240-8</id>
        <name>8</name>
        <sequence type="described" ref="VSP_007048 VSP_007050 VSP_007051"/>
    </isoform>
    <isoform>
        <id>P35240-9</id>
        <name>9</name>
        <name>MER162</name>
        <sequence type="described" ref="VSP_007044"/>
    </isoform>
    <isoform>
        <id>P35240-10</id>
        <name>10</name>
        <name>MER151</name>
        <sequence type="described" ref="VSP_007041 VSP_007043 VSP_007047 VSP_007049"/>
    </isoform>
</comment>
<comment type="tissue specificity">
    <text>Widely expressed. Isoform 1 and isoform 3 are predominant. Isoform 4, isoform 5 and isoform 6 are expressed moderately. Isoform 8 is found at low frequency. Isoform 7, isoform 9 and isoform 10 are not expressed in adult tissues, with the exception of adult retina expressing isoform 10. Isoform 9 is faintly expressed in fetal brain, heart, lung, skeletal muscle and spleen. Fetal thymus expresses isoforms 1, 7, 9 and 10 at similar levels.</text>
</comment>
<comment type="PTM">
    <text evidence="16 18">Phosphorylation of Ser-518 inhibits nuclear localization by disrupting the intramolecular association of the FERM domain with the C-terminal tail (PubMed:20178741). The dephosphorylation of Ser-518 favors the interaction with NOP53 (PubMed:21167305).</text>
</comment>
<comment type="PTM">
    <text evidence="12">Ubiquitinated by the CUL4A-RBX1-DDB1-DCAF1/VprBP E3 ubiquitin-protein ligase complex for ubiquitination and subsequent proteasome-dependent degradation.</text>
</comment>
<comment type="disease" evidence="3 4 5 8 16 17 19 20 21 25 27 28 29 31 33">
    <disease id="DI-02045">
        <name>Schwannomatosis, vestibular</name>
        <acronym>SWNV</acronym>
        <description>An autosomal dominant neoplasia syndrome characterized by the development of multiple benign nerve sheath tumors called schwannomas, particularly affecting the vestibular nerve. Affected individuals usually present with bilateral vestibular schwannomas but can have schwannomas on other cranial, spinal, and peripheral/cutaneous nerves. Meningiomas are common, whereas 20 to 35% of affected individuals develop intramedullary spinal cord tumors called ependymomas. The condition is also characterized by several ophthalmic features such as lenticular opacities, retinal hamartoma, epiretinal membranes.</description>
        <dbReference type="MIM" id="101000"/>
    </disease>
    <text>The disease is caused by variants affecting the gene represented in this entry.</text>
</comment>
<comment type="disease" evidence="7">
    <disease id="DI-03213">
        <name>Mesothelioma, malignant</name>
        <acronym>MESOM</acronym>
        <description>An aggressive neoplasm of the serosal lining of the chest. It appears as broad sheets of cells, with some regions containing spindle-shaped, sarcoma-like cells and other regions showing adenomatous patterns. Pleural mesotheliomas have been linked to exposure to asbestos.</description>
        <dbReference type="MIM" id="156240"/>
    </disease>
    <text>The disease may be caused by variants affecting the gene represented in this entry.</text>
</comment>
<comment type="online information" name="Atlas of Genetics and Cytogenetics in Oncology and Haematology">
    <link uri="https://atlasgeneticsoncology.org/gene/117/nf2-(neurofibromatosis-type-2)"/>
</comment>
<reference key="1">
    <citation type="journal article" date="1993" name="Cell">
        <title>A novel moesin-, ezrin-, radixin-like gene is a candidate for the neurofibromatosis 2 tumor suppressor.</title>
        <authorList>
            <person name="Trofatter J.A."/>
            <person name="Maccollin M.M."/>
            <person name="Rutter J.L."/>
            <person name="Murrell J.R."/>
            <person name="Duyao M.P."/>
            <person name="Parry D.N."/>
            <person name="Eldridge R."/>
            <person name="Kley N."/>
            <person name="Menon A.G."/>
            <person name="Pulaski K."/>
            <person name="Haase V.H."/>
            <person name="Ambrose C.M."/>
            <person name="Munroe D."/>
            <person name="Bove C."/>
            <person name="Haines J.L."/>
            <person name="Martuza R.L."/>
            <person name="Macdonald M.E."/>
            <person name="Seizinger B.R."/>
            <person name="Short M.P."/>
            <person name="Buckler A.J."/>
            <person name="Gusella J.F."/>
        </authorList>
    </citation>
    <scope>NUCLEOTIDE SEQUENCE [MRNA] (ISOFORM 1)</scope>
</reference>
<reference key="2">
    <citation type="journal article" date="1993" name="Nature">
        <title>Alteration in a new gene encoding a putative membrane-organizing protein causes neuro-fibromatosis type 2.</title>
        <authorList>
            <person name="Rouleau G.A."/>
            <person name="Merel P."/>
            <person name="Lutchman M."/>
            <person name="Sanson M."/>
            <person name="Zucman J."/>
            <person name="Marineau C."/>
            <person name="Hoang-Xuan K."/>
            <person name="Demczuk S."/>
            <person name="Desmaze C."/>
            <person name="Plougastel B."/>
            <person name="Pulst S."/>
            <person name="Lenoir G."/>
            <person name="Bijlsma E."/>
            <person name="Fashold R."/>
            <person name="Dumanski J.P."/>
            <person name="de Jong P."/>
            <person name="Parry D."/>
            <person name="Eldrige R."/>
            <person name="Aurias A."/>
            <person name="Delattre O."/>
            <person name="Thomas G."/>
        </authorList>
    </citation>
    <scope>NUCLEOTIDE SEQUENCE [GENOMIC DNA]</scope>
    <scope>VARIANT SWNV PRO-360</scope>
</reference>
<reference key="3">
    <citation type="journal article" date="1998" name="Hum. Mol. Genet.">
        <title>NF2 gene in neurofibromatosis type 2 patients.</title>
        <authorList>
            <person name="Zucman-Rossi J."/>
            <person name="Legoix P."/>
            <person name="Der Sarjussian H."/>
            <person name="Cheret G."/>
            <person name="Sor F."/>
            <person name="Bernardi A."/>
            <person name="Cazes L."/>
            <person name="Giraud S."/>
            <person name="Lenoir G."/>
            <person name="Thomas G."/>
        </authorList>
    </citation>
    <scope>NUCLEOTIDE SEQUENCE [GENOMIC DNA] (ISOFORMS 1 AND 2)</scope>
</reference>
<reference key="4">
    <citation type="journal article" date="1999" name="Hum. Mol. Genet.">
        <title>Novel alternatively spliced isoforms of the neurofibromatosis type 2 tumor suppressor are targeted to the nucleus and cytoplasmic granules.</title>
        <authorList>
            <person name="Schmucker B."/>
            <person name="Tang Y."/>
            <person name="Kressel M."/>
        </authorList>
    </citation>
    <scope>NUCLEOTIDE SEQUENCE [MRNA] (ISOFORMS 7; 9 AND 10)</scope>
    <scope>SUBCELLULAR LOCATION</scope>
</reference>
<reference key="5">
    <citation type="journal article" date="2002" name="Genomics">
        <title>Multiple transcription initiation sites, alternative splicing, and differential polyadenylation contribute to the complexity of human neurofibromatosis 2 transcripts.</title>
        <authorList>
            <person name="Chang L.-S."/>
            <person name="Akhmametyeva E.M."/>
            <person name="Wu Y."/>
            <person name="Zhu L."/>
            <person name="Welling D.B."/>
        </authorList>
    </citation>
    <scope>NUCLEOTIDE SEQUENCE [MRNA] (ISOFORMS 1; 3; 4; 5; 6 AND 8)</scope>
</reference>
<reference key="6">
    <citation type="journal article" date="2004" name="Genome Biol.">
        <title>A genome annotation-driven approach to cloning the human ORFeome.</title>
        <authorList>
            <person name="Collins J.E."/>
            <person name="Wright C.L."/>
            <person name="Edwards C.A."/>
            <person name="Davis M.P."/>
            <person name="Grinham J.A."/>
            <person name="Cole C.G."/>
            <person name="Goward M.E."/>
            <person name="Aguado B."/>
            <person name="Mallya M."/>
            <person name="Mokrab Y."/>
            <person name="Huckle E.J."/>
            <person name="Beare D.M."/>
            <person name="Dunham I."/>
        </authorList>
    </citation>
    <scope>NUCLEOTIDE SEQUENCE [LARGE SCALE MRNA] (ISOFORM 1)</scope>
</reference>
<reference key="7">
    <citation type="journal article" date="2004" name="Genome Res.">
        <title>The status, quality, and expansion of the NIH full-length cDNA project: the Mammalian Gene Collection (MGC).</title>
        <authorList>
            <consortium name="The MGC Project Team"/>
        </authorList>
    </citation>
    <scope>NUCLEOTIDE SEQUENCE [LARGE SCALE MRNA] (ISOFORMS 1 AND 4)</scope>
    <source>
        <tissue>Lung</tissue>
        <tissue>Skin</tissue>
    </source>
</reference>
<reference key="8">
    <citation type="journal article" date="1995" name="Medecine/Sciences">
        <title>The gene of neurofibromatosis type 2.</title>
        <authorList>
            <person name="Marineau C."/>
            <person name="Merel P."/>
            <person name="Rouleau G.A."/>
            <person name="Thomas G."/>
        </authorList>
    </citation>
    <scope>REVIEW</scope>
</reference>
<reference key="9">
    <citation type="journal article" date="1998" name="J. Biol. Chem.">
        <title>NHE-RF, a regulatory cofactor for Na(+)-H+ exchange, is a common interactor for merlin and ERM (MERM) proteins.</title>
        <authorList>
            <person name="Murthy A."/>
            <person name="Gonzalez-Agosti C."/>
            <person name="Cordero E."/>
            <person name="Pinney D."/>
            <person name="Candia C."/>
            <person name="Solomon F."/>
            <person name="Gusella J."/>
            <person name="Ramesh V."/>
        </authorList>
    </citation>
    <scope>INTERACTION WITH NHERF1</scope>
</reference>
<reference key="10">
    <citation type="journal article" date="2000" name="Hum. Mol. Genet.">
        <title>The neurofibromatosis 2 tumor suppressor protein interacts with hepatocyte growth factor-regulated tyrosine kinase substrate.</title>
        <authorList>
            <person name="Scoles D.R."/>
            <person name="Huynh D.P."/>
            <person name="Chen M.S."/>
            <person name="Burke S.P."/>
            <person name="Gutmann D.H."/>
            <person name="Pulst S.-M."/>
        </authorList>
    </citation>
    <scope>INTERACTION WITH HGS</scope>
</reference>
<reference key="11">
    <citation type="journal article" date="2000" name="Mol. Cell. Biol.">
        <title>Cloning and characterization of SCHIP-1, a novel protein interacting specifically with spliced isoforms and naturally occurring mutant NF2 proteins.</title>
        <authorList>
            <person name="Goutebroze L."/>
            <person name="Brault E."/>
            <person name="Muchardt C."/>
            <person name="Camonis J."/>
            <person name="Thomas G."/>
        </authorList>
    </citation>
    <scope>INTERACTION WITH SCHIP1</scope>
    <scope>CHARACTERIZATION OF VARIANTS SWNV PHE-119 DEL</scope>
    <scope>CHARACTERIZATION OF VARIANT MET-219</scope>
    <source>
        <tissue>Brain</tissue>
    </source>
</reference>
<reference key="12">
    <citation type="journal article" date="2002" name="Neurology">
        <title>Neurofibromatosis 2 and malignant mesothelioma.</title>
        <authorList>
            <person name="Baser M.E."/>
            <person name="De Rienzo A."/>
            <person name="Altomare D."/>
            <person name="Balsara B.R."/>
            <person name="Hedrick N.M."/>
            <person name="Gutmann D.H."/>
            <person name="Pitts L.H."/>
            <person name="Jackler R.K."/>
            <person name="Testa J.R."/>
        </authorList>
    </citation>
    <scope>INVOLVEMENT IN MESOM</scope>
</reference>
<reference key="13">
    <citation type="journal article" date="2004" name="Biochem. Biophys. Res. Commun.">
        <title>MAP, a protein interacting with a tumor suppressor, merlin, through the run domain.</title>
        <authorList>
            <person name="Lee I.K."/>
            <person name="Kim K.-S."/>
            <person name="Kim H."/>
            <person name="Lee J.Y."/>
            <person name="Ryu C.H."/>
            <person name="Chun H.J."/>
            <person name="Lee K.-U."/>
            <person name="Lim Y."/>
            <person name="Kim Y.H."/>
            <person name="Huh P.-W."/>
            <person name="Lee K.-H."/>
            <person name="Han S.-I."/>
            <person name="Jun T.-Y."/>
            <person name="Rha H.K."/>
        </authorList>
    </citation>
    <scope>INTERACTION WITH SGSM3</scope>
</reference>
<reference key="14">
    <citation type="journal article" date="2004" name="Proc. Natl. Acad. Sci. U.S.A.">
        <title>Neurofibromatosis 2 (NF2) tumor suppressor merlin inhibits phosphatidylinositol 3-kinase through binding to PIKE-L.</title>
        <authorList>
            <person name="Rong R."/>
            <person name="Tang X."/>
            <person name="Gutmann D.H."/>
            <person name="Ye K."/>
        </authorList>
    </citation>
    <scope>INTERACTION WITH AGAP2</scope>
    <scope>MUTAGENESIS OF LEU-64</scope>
</reference>
<reference key="15">
    <citation type="journal article" date="2006" name="Cell">
        <title>Global, in vivo, and site-specific phosphorylation dynamics in signaling networks.</title>
        <authorList>
            <person name="Olsen J.V."/>
            <person name="Blagoev B."/>
            <person name="Gnad F."/>
            <person name="Macek B."/>
            <person name="Kumar C."/>
            <person name="Mortensen P."/>
            <person name="Mann M."/>
        </authorList>
    </citation>
    <scope>PHOSPHORYLATION [LARGE SCALE ANALYSIS] AT SER-518</scope>
    <scope>IDENTIFICATION BY MASS SPECTROMETRY [LARGE SCALE ANALYSIS]</scope>
    <source>
        <tissue>Cervix carcinoma</tissue>
    </source>
</reference>
<reference key="16">
    <citation type="journal article" date="2008" name="Oncogene">
        <title>VprBP targets Merlin to the Roc1-Cul4A-DDB1 E3 ligase complex for degradation.</title>
        <authorList>
            <person name="Huang J."/>
            <person name="Chen J."/>
        </authorList>
    </citation>
    <scope>INTERACTION WITH DCAF1</scope>
    <scope>UBIQUITINATION</scope>
</reference>
<reference key="17">
    <citation type="journal article" date="2008" name="Proc. Natl. Acad. Sci. U.S.A.">
        <title>A quantitative atlas of mitotic phosphorylation.</title>
        <authorList>
            <person name="Dephoure N."/>
            <person name="Zhou C."/>
            <person name="Villen J."/>
            <person name="Beausoleil S.A."/>
            <person name="Bakalarski C.E."/>
            <person name="Elledge S.J."/>
            <person name="Gygi S.P."/>
        </authorList>
    </citation>
    <scope>IDENTIFICATION BY MASS SPECTROMETRY [LARGE SCALE ANALYSIS]</scope>
    <source>
        <tissue>Cervix carcinoma</tissue>
    </source>
</reference>
<reference key="18">
    <citation type="journal article" date="2009" name="Exp. Biol. Med.">
        <title>Identification of erythrocyte p55/MPP1 as a binding partner of NF2 tumor suppressor protein/Merlin.</title>
        <authorList>
            <person name="Seo P.-S."/>
            <person name="Quinn B.J."/>
            <person name="Khan A.A."/>
            <person name="Zeng L."/>
            <person name="Takoudis C.G."/>
            <person name="Hanada T."/>
            <person name="Bolis A."/>
            <person name="Bolino A."/>
            <person name="Chishti A.H."/>
        </authorList>
    </citation>
    <scope>INTERACTION WITH MPP1</scope>
    <scope>SUBCELLULAR LOCATION</scope>
</reference>
<reference key="19">
    <citation type="journal article" date="2010" name="Cell">
        <title>Merlin/NF2 suppresses tumorigenesis by inhibiting the E3 ubiquitin ligase CRL4(DCAF1) in the nucleus.</title>
        <authorList>
            <person name="Li W."/>
            <person name="You L."/>
            <person name="Cooper J."/>
            <person name="Schiavon G."/>
            <person name="Pepe-Caprio A."/>
            <person name="Zhou L."/>
            <person name="Ishii R."/>
            <person name="Giovannini M."/>
            <person name="Hanemann C.O."/>
            <person name="Long S.B."/>
            <person name="Erdjument-Bromage H."/>
            <person name="Zhou P."/>
            <person name="Tempst P."/>
            <person name="Giancotti F.G."/>
        </authorList>
    </citation>
    <scope>FUNCTION</scope>
    <scope>SUBCELLULAR LOCATION</scope>
    <scope>INTERACTION WITH DCAF1 AND THE CUL4A-RBX1-DDB1-VPRBP/DCAF1 E3 UBIQUITIN-PROTEIN LIGASE COMPLEX</scope>
    <scope>PHOSPHORYLATION</scope>
    <scope>MUTAGENESIS OF LEU-64 AND SER-518</scope>
    <scope>CHARACTERIZATION OF VARIANT ARG-46</scope>
    <scope>CHARACTERIZATION OF VARIANTS SWNV SER-62 AND PRO-141</scope>
</reference>
<reference key="20">
    <citation type="journal article" date="2010" name="Dev. Cell">
        <title>Kibra functions as a tumor suppressor protein that regulates Hippo signaling in conjunction with Merlin and Expanded.</title>
        <authorList>
            <person name="Yu J."/>
            <person name="Zheng Y."/>
            <person name="Dong J."/>
            <person name="Klusza S."/>
            <person name="Deng W.-M."/>
            <person name="Pan D."/>
        </authorList>
    </citation>
    <scope>FUNCTION</scope>
</reference>
<reference key="21">
    <citation type="journal article" date="2010" name="Dev. Cell">
        <title>Kibra Is a regulator of the Salvador/Warts/Hippo signaling network.</title>
        <authorList>
            <person name="Genevet A."/>
            <person name="Wehr M.C."/>
            <person name="Brain R."/>
            <person name="Thompson B.J."/>
            <person name="Tapon N."/>
        </authorList>
    </citation>
    <scope>INTERACTION WITH WWC1</scope>
</reference>
<reference key="22">
    <citation type="journal article" date="2011" name="BMC Syst. Biol.">
        <title>Initial characterization of the human central proteome.</title>
        <authorList>
            <person name="Burkard T.R."/>
            <person name="Planyavsky M."/>
            <person name="Kaupe I."/>
            <person name="Breitwieser F.P."/>
            <person name="Buerckstuemmer T."/>
            <person name="Bennett K.L."/>
            <person name="Superti-Furga G."/>
            <person name="Colinge J."/>
        </authorList>
    </citation>
    <scope>IDENTIFICATION BY MASS SPECTROMETRY [LARGE SCALE ANALYSIS]</scope>
</reference>
<reference key="23">
    <citation type="journal article" date="2011" name="Int. J. Biochem. Cell Biol.">
        <title>Moesin-ezrin-radixin-like protein (merlin) mediates protein interacting with the carboxyl terminus-1 (PICT-1)-induced growth inhibition of glioblastoma cells in the nucleus.</title>
        <authorList>
            <person name="Chen H."/>
            <person name="Mei L."/>
            <person name="Zhou L."/>
            <person name="Zhang X."/>
            <person name="Guo C."/>
            <person name="Li J."/>
            <person name="Wang H."/>
            <person name="Zhu Y."/>
            <person name="Zheng Y."/>
            <person name="Huang L."/>
        </authorList>
    </citation>
    <scope>FUNCTION</scope>
    <scope>INTERACTION WITH NOP53</scope>
    <scope>PHOSPHORYLATION</scope>
</reference>
<reference key="24">
    <citation type="journal article" date="2013" name="J. Proteome Res.">
        <title>Toward a comprehensive characterization of a human cancer cell phosphoproteome.</title>
        <authorList>
            <person name="Zhou H."/>
            <person name="Di Palma S."/>
            <person name="Preisinger C."/>
            <person name="Peng M."/>
            <person name="Polat A.N."/>
            <person name="Heck A.J."/>
            <person name="Mohammed S."/>
        </authorList>
    </citation>
    <scope>PHOSPHORYLATION [LARGE SCALE ANALYSIS] AT SER-13</scope>
    <scope>IDENTIFICATION BY MASS SPECTROMETRY [LARGE SCALE ANALYSIS]</scope>
    <source>
        <tissue>Cervix carcinoma</tissue>
    </source>
</reference>
<reference key="25">
    <citation type="journal article" date="2002" name="Acta Crystallogr. D">
        <title>The structure of the FERM domain of merlin, the neurofibromatosis type 2 gene product.</title>
        <authorList>
            <person name="Kang B.S."/>
            <person name="Cooper D.R."/>
            <person name="Devedjiev Y."/>
            <person name="Derewenda U."/>
            <person name="Derewenda Z.S."/>
        </authorList>
    </citation>
    <scope>X-RAY CRYSTALLOGRAPHY (1.8 ANGSTROMS) OF 1-313</scope>
</reference>
<reference key="26">
    <citation type="journal article" date="1993" name="JAMA">
        <title>DNA diagnosis of neurofibromatosis 2. Altered coding sequence of the merlin tumor suppressor in an extended pedigree.</title>
        <authorList>
            <person name="Maccollin M.M."/>
            <person name="Mohney T."/>
            <person name="Trofatter J.A."/>
            <person name="Wertelecki W."/>
            <person name="Ramesh V."/>
            <person name="Gusella J.F."/>
        </authorList>
    </citation>
    <scope>VARIANT SWNV TYR-220</scope>
</reference>
<reference key="27">
    <citation type="journal article" date="1994" name="Am. J. Hum. Genet.">
        <title>Mutational analysis of patients with neurofibromatosis 2.</title>
        <authorList>
            <person name="Maccollin M.M."/>
            <person name="Ramesh V."/>
            <person name="Jacoby L.B."/>
            <person name="Louis D.N."/>
            <person name="Rubio M.-P."/>
            <person name="Pulaski K."/>
            <person name="Trofatter J.A."/>
            <person name="Short M.P."/>
            <person name="Bove C."/>
            <person name="Eldridge R."/>
            <person name="Parry D.M."/>
            <person name="Gusella J.F."/>
        </authorList>
    </citation>
    <scope>VARIANT SWNV PHE-96 DEL</scope>
</reference>
<reference key="28">
    <citation type="journal article" date="1994" name="Hum. Mol. Genet.">
        <title>Somatic NF2 gene mutations in familial and non-familial vestibular schwannoma.</title>
        <authorList>
            <person name="Irving R.M."/>
            <person name="Moffat D.A."/>
            <person name="Hardy D.G."/>
            <person name="Barton D.E."/>
            <person name="Xuereb J.H."/>
            <person name="Maher E.R."/>
        </authorList>
    </citation>
    <scope>VARIANT ARG-46</scope>
</reference>
<reference key="29">
    <citation type="journal article" date="1994" name="Hum. Mol. Genet.">
        <title>Exon scanning for mutation of the NF2 gene in schwannomas.</title>
        <authorList>
            <person name="Jacoby L.B."/>
            <person name="Maccollin M.M."/>
            <person name="Louis D.N."/>
            <person name="Mohney T."/>
            <person name="Rubio M.-P."/>
            <person name="Pulaski K."/>
            <person name="Trofatter J.A."/>
            <person name="Kley N."/>
            <person name="Seizinger B.R."/>
            <person name="Ramesh V."/>
            <person name="Gusella J.F."/>
        </authorList>
    </citation>
    <scope>VARIANTS MET-219 AND CYS-418</scope>
</reference>
<reference key="30">
    <citation type="journal article" date="1994" name="Hum. Mol. Genet.">
        <title>Germline mutations in the neurofibromatosis type 2 tumour suppressor gene.</title>
        <authorList>
            <person name="Bourn D."/>
            <person name="Carter S.A."/>
            <person name="Mason S."/>
            <person name="Gareth D."/>
            <person name="Evans R."/>
            <person name="Strachan T."/>
        </authorList>
    </citation>
    <scope>VARIANTS SWNV SER-62; GLY-106 AND MET-352</scope>
</reference>
<reference key="31">
    <citation type="journal article" date="1994" name="Hum. Mol. Genet.">
        <title>Mutations of the neurofibromatosis type 2 gene and lack of the gene product in vestibular schwannomas.</title>
        <authorList>
            <person name="Sainz J."/>
            <person name="Huynh D.P."/>
            <person name="Figueroa K."/>
            <person name="Ragge N.K."/>
            <person name="Baser M.E."/>
            <person name="Pulst S.M."/>
        </authorList>
    </citation>
    <scope>VARIANTS GLU-79 AND HIS-351</scope>
</reference>
<reference key="32">
    <citation type="journal article" date="1994" name="Nat. Genet.">
        <title>Mutations in transcript isoforms of the neurofibromatosis 2 gene in multiple human tumour types.</title>
        <authorList>
            <person name="Bianchi A.B."/>
            <person name="Hara T."/>
            <person name="Ramesh V."/>
            <person name="Gao J."/>
            <person name="Klein Szanto A.J."/>
            <person name="Morin F."/>
            <person name="Menon A.G."/>
            <person name="Trofatter J.A."/>
            <person name="Gusella J.F."/>
            <person name="Seizinger B.R."/>
            <person name="Kley N."/>
        </authorList>
    </citation>
    <scope>VARIANTS PHE-273 AND ILE-364</scope>
</reference>
<reference key="33">
    <citation type="journal article" date="1995" name="Hum. Genet.">
        <title>Eleven novel mutations in the NF2 tumour suppressor gene.</title>
        <authorList>
            <person name="Bourn D."/>
            <person name="Evans G."/>
            <person name="Mason S."/>
            <person name="Tekes S."/>
            <person name="Trueman L."/>
            <person name="Strachan T."/>
        </authorList>
    </citation>
    <scope>VARIANTS SWNV PHE-119 DEL; GLU-413 AND PRO-535</scope>
</reference>
<reference key="34">
    <citation type="journal article" date="1995" name="J. Med. Genet.">
        <title>Diagnostic issues in a family with late onset type 2 neurofibromatosis.</title>
        <authorList>
            <person name="Evans D.G.R."/>
            <person name="Bourn D."/>
            <person name="Wallace A."/>
            <person name="Ramsden R.T."/>
            <person name="Mitchell J.D."/>
            <person name="Strachan T."/>
        </authorList>
    </citation>
    <scope>VARIANT SWNV PRO-535</scope>
</reference>
<reference key="35">
    <citation type="journal article" date="1996" name="Hum. Genet.">
        <title>A missense mutation in the NF2 gene results in moderate and mild clinical phenotypes of neurofibromatosis type 2.</title>
        <authorList>
            <person name="Kluwe L."/>
            <person name="Mautner V.-F."/>
        </authorList>
    </citation>
    <scope>VARIANT SWNV PRO-538</scope>
</reference>
<reference key="36">
    <citation type="journal article" date="1996" name="Hum. Genet.">
        <title>Screening for mutations in the neurofibromatosis type 2 (NF2) gene in sporadic meningiomas.</title>
        <authorList>
            <person name="de Vitis L.R."/>
            <person name="Tedde A."/>
            <person name="Vitelli F."/>
            <person name="Ammannati F."/>
            <person name="Mennonna P."/>
            <person name="Bigozzi U."/>
            <person name="Montali E."/>
            <person name="Papi L."/>
        </authorList>
    </citation>
    <scope>VARIANTS PHE-96 DEL; ILE-117; PHE-119 DEL; 122-VAL--GLU-129 DEL AND PHE-339</scope>
</reference>
<reference key="37">
    <citation type="journal article" date="1996" name="Hum. Genet.">
        <title>Mutational spectrum in the neurofibromatosis type 2 gene in sporadic and familial schwannomas.</title>
        <authorList>
            <person name="Welling D.B."/>
            <person name="Guida M."/>
            <person name="Goll F."/>
            <person name="Pearl D.K."/>
            <person name="Glasscock M.E."/>
            <person name="Pappas D.G."/>
            <person name="Linthicum F.H."/>
            <person name="Rogers D."/>
            <person name="Prior T.W."/>
        </authorList>
    </citation>
    <scope>VARIANTS SWNV CYS-197 AND HIS-539</scope>
</reference>
<reference key="38">
    <citation type="journal article" date="1998" name="J. Med. Genet.">
        <title>Genotype/phenotype correlations in type 2 neurofibromatosis (NF2): evidence for more severe disease associated with truncating mutations.</title>
        <authorList>
            <person name="Evans D.G.R."/>
            <person name="Trueman L."/>
            <person name="Wallace A."/>
            <person name="Collins S."/>
            <person name="Strachan T."/>
        </authorList>
    </citation>
    <scope>VARIANTS SWNV SER-62; VAL-77; GLY-106; MET-352; GLU-413 AND PRO-535</scope>
</reference>
<reference key="39">
    <citation type="journal article" date="1999" name="J. Med. Genet.">
        <authorList>
            <person name="Evans D.G."/>
            <person name="Trueman L."/>
            <person name="Wallace A."/>
            <person name="Collins S."/>
            <person name="Strachan T."/>
        </authorList>
    </citation>
    <scope>ERRATUM OF PUBMED:9643284</scope>
</reference>
<reference key="40">
    <citation type="journal article" date="1999" name="Am. J. Hum. Genet.">
        <title>Germ-line NF2 mutations and disease severity in neurofibromatosis type 2 patients with retinal abnormalities.</title>
        <authorList>
            <person name="Baser M.E."/>
            <person name="Kluwe L."/>
            <person name="Mautner V.-F."/>
        </authorList>
    </citation>
    <scope>VARIANT SWNV ARG-234</scope>
</reference>
<reference key="41">
    <citation type="journal article" date="2000" name="Hum. Mutat.">
        <title>Detection of novel NF2 mutations by an RNA mismatch cleavage method.</title>
        <authorList>
            <person name="Faudoa R."/>
            <person name="Xue Z."/>
            <person name="Lee F."/>
            <person name="Baser M.E."/>
            <person name="Hung G."/>
        </authorList>
    </citation>
    <scope>VARIANTS SWNV SER-62; THR-533 AND MET-579</scope>
</reference>
<reference key="42">
    <citation type="journal article" date="2002" name="Reprod. BioMed. Online">
        <title>Preimplantation diagnosis for neurofibromatosis.</title>
        <authorList>
            <person name="Verlinsky Y."/>
            <person name="Rechitsky S."/>
            <person name="Verlinsky O."/>
            <person name="Chistokhina A."/>
            <person name="Sharapova T."/>
            <person name="Masciangelo C."/>
            <person name="Levy M."/>
            <person name="Kaplan B."/>
            <person name="Lederer K."/>
            <person name="Kuliev A."/>
        </authorList>
    </citation>
    <scope>VARIANT SWNV PRO-141</scope>
</reference>
<reference key="43">
    <citation type="journal article" date="2006" name="Science">
        <title>The consensus coding sequences of human breast and colorectal cancers.</title>
        <authorList>
            <person name="Sjoeblom T."/>
            <person name="Jones S."/>
            <person name="Wood L.D."/>
            <person name="Parsons D.W."/>
            <person name="Lin J."/>
            <person name="Barber T.D."/>
            <person name="Mandelker D."/>
            <person name="Leary R.J."/>
            <person name="Ptak J."/>
            <person name="Silliman N."/>
            <person name="Szabo S."/>
            <person name="Buckhaults P."/>
            <person name="Farrell C."/>
            <person name="Meeh P."/>
            <person name="Markowitz S.D."/>
            <person name="Willis J."/>
            <person name="Dawson D."/>
            <person name="Willson J.K.V."/>
            <person name="Gazdar A.F."/>
            <person name="Hartigan J."/>
            <person name="Wu L."/>
            <person name="Liu C."/>
            <person name="Parmigiani G."/>
            <person name="Park B.H."/>
            <person name="Bachman K.E."/>
            <person name="Papadopoulos N."/>
            <person name="Vogelstein B."/>
            <person name="Kinzler K.W."/>
            <person name="Velculescu V.E."/>
        </authorList>
    </citation>
    <scope>VARIANT [LARGE SCALE ANALYSIS] LYS-463</scope>
</reference>
<reference key="44">
    <citation type="journal article" date="2010" name="Korean J. Lab. Med.">
        <title>Molecular characterization of the NF2 gene in Korean patients with neurofibromatosis type 2: a report of four novel mutations.</title>
        <authorList>
            <person name="Seong M.W."/>
            <person name="Yeo I.K."/>
            <person name="Cho S.I."/>
            <person name="Park C.K."/>
            <person name="Kim S.K."/>
            <person name="Paek S.H."/>
            <person name="Kim D.G."/>
            <person name="Jung H.W."/>
            <person name="Park H."/>
            <person name="Kim S.Y."/>
            <person name="Kim J.Y."/>
            <person name="Park S.S."/>
        </authorList>
    </citation>
    <scope>VARIANT SWNV ARG-133</scope>
</reference>
<organism>
    <name type="scientific">Homo sapiens</name>
    <name type="common">Human</name>
    <dbReference type="NCBI Taxonomy" id="9606"/>
    <lineage>
        <taxon>Eukaryota</taxon>
        <taxon>Metazoa</taxon>
        <taxon>Chordata</taxon>
        <taxon>Craniata</taxon>
        <taxon>Vertebrata</taxon>
        <taxon>Euteleostomi</taxon>
        <taxon>Mammalia</taxon>
        <taxon>Eutheria</taxon>
        <taxon>Euarchontoglires</taxon>
        <taxon>Primates</taxon>
        <taxon>Haplorrhini</taxon>
        <taxon>Catarrhini</taxon>
        <taxon>Hominidae</taxon>
        <taxon>Homo</taxon>
    </lineage>
</organism>
<dbReference type="EMBL" id="L11353">
    <property type="protein sequence ID" value="AAA36212.1"/>
    <property type="molecule type" value="mRNA"/>
</dbReference>
<dbReference type="EMBL" id="X72655">
    <property type="protein sequence ID" value="CAA51220.1"/>
    <property type="molecule type" value="Genomic_DNA"/>
</dbReference>
<dbReference type="EMBL" id="X72656">
    <property type="protein sequence ID" value="CAA51220.1"/>
    <property type="status" value="JOINED"/>
    <property type="molecule type" value="Genomic_DNA"/>
</dbReference>
<dbReference type="EMBL" id="X72657">
    <property type="protein sequence ID" value="CAA51220.1"/>
    <property type="status" value="JOINED"/>
    <property type="molecule type" value="Genomic_DNA"/>
</dbReference>
<dbReference type="EMBL" id="X72658">
    <property type="protein sequence ID" value="CAA51220.1"/>
    <property type="status" value="JOINED"/>
    <property type="molecule type" value="Genomic_DNA"/>
</dbReference>
<dbReference type="EMBL" id="X72659">
    <property type="protein sequence ID" value="CAA51220.1"/>
    <property type="status" value="JOINED"/>
    <property type="molecule type" value="Genomic_DNA"/>
</dbReference>
<dbReference type="EMBL" id="X72660">
    <property type="protein sequence ID" value="CAA51220.1"/>
    <property type="status" value="JOINED"/>
    <property type="molecule type" value="Genomic_DNA"/>
</dbReference>
<dbReference type="EMBL" id="X72661">
    <property type="protein sequence ID" value="CAA51220.1"/>
    <property type="status" value="JOINED"/>
    <property type="molecule type" value="Genomic_DNA"/>
</dbReference>
<dbReference type="EMBL" id="X72662">
    <property type="protein sequence ID" value="CAA51220.1"/>
    <property type="status" value="JOINED"/>
    <property type="molecule type" value="Genomic_DNA"/>
</dbReference>
<dbReference type="EMBL" id="X72663">
    <property type="protein sequence ID" value="CAA51220.1"/>
    <property type="status" value="JOINED"/>
    <property type="molecule type" value="Genomic_DNA"/>
</dbReference>
<dbReference type="EMBL" id="X72664">
    <property type="protein sequence ID" value="CAA51220.1"/>
    <property type="status" value="JOINED"/>
    <property type="molecule type" value="Genomic_DNA"/>
</dbReference>
<dbReference type="EMBL" id="X72665">
    <property type="protein sequence ID" value="CAA51220.1"/>
    <property type="status" value="JOINED"/>
    <property type="molecule type" value="Genomic_DNA"/>
</dbReference>
<dbReference type="EMBL" id="X72666">
    <property type="protein sequence ID" value="CAA51220.1"/>
    <property type="status" value="JOINED"/>
    <property type="molecule type" value="Genomic_DNA"/>
</dbReference>
<dbReference type="EMBL" id="X72667">
    <property type="protein sequence ID" value="CAA51220.1"/>
    <property type="status" value="JOINED"/>
    <property type="molecule type" value="Genomic_DNA"/>
</dbReference>
<dbReference type="EMBL" id="X72668">
    <property type="protein sequence ID" value="CAA51220.1"/>
    <property type="status" value="JOINED"/>
    <property type="molecule type" value="Genomic_DNA"/>
</dbReference>
<dbReference type="EMBL" id="X72669">
    <property type="protein sequence ID" value="CAA51220.1"/>
    <property type="status" value="JOINED"/>
    <property type="molecule type" value="Genomic_DNA"/>
</dbReference>
<dbReference type="EMBL" id="X72670">
    <property type="protein sequence ID" value="CAA51220.1"/>
    <property type="status" value="JOINED"/>
    <property type="molecule type" value="Genomic_DNA"/>
</dbReference>
<dbReference type="EMBL" id="Z22664">
    <property type="protein sequence ID" value="CAA80377.1"/>
    <property type="molecule type" value="mRNA"/>
</dbReference>
<dbReference type="EMBL" id="Y18000">
    <property type="protein sequence ID" value="CAA76992.1"/>
    <property type="molecule type" value="Genomic_DNA"/>
</dbReference>
<dbReference type="EMBL" id="Y18000">
    <property type="protein sequence ID" value="CAA76993.1"/>
    <property type="molecule type" value="Genomic_DNA"/>
</dbReference>
<dbReference type="EMBL" id="AF122827">
    <property type="protein sequence ID" value="AAD48752.1"/>
    <property type="molecule type" value="mRNA"/>
</dbReference>
<dbReference type="EMBL" id="AF122828">
    <property type="protein sequence ID" value="AAD48753.1"/>
    <property type="molecule type" value="mRNA"/>
</dbReference>
<dbReference type="EMBL" id="AF123570">
    <property type="protein sequence ID" value="AAD48754.1"/>
    <property type="molecule type" value="mRNA"/>
</dbReference>
<dbReference type="EMBL" id="AF369657">
    <property type="protein sequence ID" value="AAK54160.1"/>
    <property type="molecule type" value="mRNA"/>
</dbReference>
<dbReference type="EMBL" id="AF369658">
    <property type="protein sequence ID" value="AAK54161.1"/>
    <property type="molecule type" value="mRNA"/>
</dbReference>
<dbReference type="EMBL" id="AF369661">
    <property type="protein sequence ID" value="AAK54162.1"/>
    <property type="molecule type" value="mRNA"/>
</dbReference>
<dbReference type="EMBL" id="AF369662">
    <property type="protein sequence ID" value="AAK54163.1"/>
    <property type="molecule type" value="mRNA"/>
</dbReference>
<dbReference type="EMBL" id="AF369663">
    <property type="protein sequence ID" value="AAK54164.1"/>
    <property type="molecule type" value="mRNA"/>
</dbReference>
<dbReference type="EMBL" id="AF369664">
    <property type="protein sequence ID" value="AAK54165.1"/>
    <property type="molecule type" value="mRNA"/>
</dbReference>
<dbReference type="EMBL" id="AF369665">
    <property type="protein sequence ID" value="AAK54166.1"/>
    <property type="molecule type" value="mRNA"/>
</dbReference>
<dbReference type="EMBL" id="AF369700">
    <property type="protein sequence ID" value="AAK54195.1"/>
    <property type="molecule type" value="mRNA"/>
</dbReference>
<dbReference type="EMBL" id="AF369701">
    <property type="protein sequence ID" value="AAK54196.1"/>
    <property type="molecule type" value="mRNA"/>
</dbReference>
<dbReference type="EMBL" id="CR456530">
    <property type="protein sequence ID" value="CAG30416.1"/>
    <property type="molecule type" value="mRNA"/>
</dbReference>
<dbReference type="EMBL" id="BC003112">
    <property type="protein sequence ID" value="AAH03112.2"/>
    <property type="molecule type" value="mRNA"/>
</dbReference>
<dbReference type="EMBL" id="BC020257">
    <property type="protein sequence ID" value="AAH20257.1"/>
    <property type="molecule type" value="mRNA"/>
</dbReference>
<dbReference type="CCDS" id="CCDS13861.1">
    <molecule id="P35240-1"/>
</dbReference>
<dbReference type="CCDS" id="CCDS13862.1">
    <molecule id="P35240-3"/>
</dbReference>
<dbReference type="CCDS" id="CCDS13863.1">
    <molecule id="P35240-6"/>
</dbReference>
<dbReference type="CCDS" id="CCDS13864.1">
    <molecule id="P35240-5"/>
</dbReference>
<dbReference type="CCDS" id="CCDS13865.1">
    <molecule id="P35240-4"/>
</dbReference>
<dbReference type="CCDS" id="CCDS54516.1">
    <molecule id="P35240-9"/>
</dbReference>
<dbReference type="PIR" id="S33809">
    <property type="entry name" value="S33809"/>
</dbReference>
<dbReference type="RefSeq" id="NP_000259.1">
    <molecule id="P35240-1"/>
    <property type="nucleotide sequence ID" value="NM_000268.4"/>
</dbReference>
<dbReference type="RefSeq" id="NP_001393987.1">
    <molecule id="P35240-5"/>
    <property type="nucleotide sequence ID" value="NM_001407058.1"/>
</dbReference>
<dbReference type="RefSeq" id="NP_001393992.1">
    <molecule id="P35240-4"/>
    <property type="nucleotide sequence ID" value="NM_001407063.1"/>
</dbReference>
<dbReference type="RefSeq" id="NP_001393995.1">
    <molecule id="P35240-3"/>
    <property type="nucleotide sequence ID" value="NM_001407066.1"/>
</dbReference>
<dbReference type="RefSeq" id="NP_057502.2">
    <molecule id="P35240-3"/>
    <property type="nucleotide sequence ID" value="NM_016418.5"/>
</dbReference>
<dbReference type="RefSeq" id="NP_861546.1">
    <molecule id="P35240-3"/>
    <property type="nucleotide sequence ID" value="NM_181825.3"/>
</dbReference>
<dbReference type="RefSeq" id="NP_861966.1">
    <molecule id="P35240-6"/>
    <property type="nucleotide sequence ID" value="NM_181828.3"/>
</dbReference>
<dbReference type="RefSeq" id="NP_861967.1">
    <molecule id="P35240-5"/>
    <property type="nucleotide sequence ID" value="NM_181829.3"/>
</dbReference>
<dbReference type="RefSeq" id="NP_861968.1">
    <molecule id="P35240-4"/>
    <property type="nucleotide sequence ID" value="NM_181830.3"/>
</dbReference>
<dbReference type="RefSeq" id="NP_861969.1">
    <molecule id="P35240-4"/>
    <property type="nucleotide sequence ID" value="NM_181831.3"/>
</dbReference>
<dbReference type="RefSeq" id="NP_861970.1">
    <molecule id="P35240-3"/>
    <property type="nucleotide sequence ID" value="NM_181832.3"/>
</dbReference>
<dbReference type="RefSeq" id="NP_861971.1">
    <molecule id="P35240-9"/>
    <property type="nucleotide sequence ID" value="NM_181833.3"/>
</dbReference>
<dbReference type="PDB" id="1H4R">
    <property type="method" value="X-ray"/>
    <property type="resolution" value="1.80 A"/>
    <property type="chains" value="A/B=1-313"/>
</dbReference>
<dbReference type="PDB" id="3U8Z">
    <property type="method" value="X-ray"/>
    <property type="resolution" value="2.64 A"/>
    <property type="chains" value="A/B/C/D=18-312"/>
</dbReference>
<dbReference type="PDB" id="4ZRI">
    <property type="method" value="X-ray"/>
    <property type="resolution" value="2.70 A"/>
    <property type="chains" value="A/B=1-320"/>
</dbReference>
<dbReference type="PDB" id="4ZRJ">
    <property type="method" value="X-ray"/>
    <property type="resolution" value="2.30 A"/>
    <property type="chains" value="A=1-320, B=506-595"/>
</dbReference>
<dbReference type="PDB" id="6CDS">
    <property type="method" value="X-ray"/>
    <property type="resolution" value="2.62 A"/>
    <property type="chains" value="A/B=1-339"/>
</dbReference>
<dbReference type="PDB" id="7LWH">
    <property type="method" value="X-ray"/>
    <property type="resolution" value="1.61 A"/>
    <property type="chains" value="A=1-339"/>
</dbReference>
<dbReference type="PDBsum" id="1H4R"/>
<dbReference type="PDBsum" id="3U8Z"/>
<dbReference type="PDBsum" id="4ZRI"/>
<dbReference type="PDBsum" id="4ZRJ"/>
<dbReference type="PDBsum" id="6CDS"/>
<dbReference type="PDBsum" id="7LWH"/>
<dbReference type="SMR" id="P35240"/>
<dbReference type="BioGRID" id="110844">
    <property type="interactions" value="382"/>
</dbReference>
<dbReference type="CORUM" id="P35240"/>
<dbReference type="DIP" id="DIP-35389N"/>
<dbReference type="ELM" id="P35240"/>
<dbReference type="FunCoup" id="P35240">
    <property type="interactions" value="1745"/>
</dbReference>
<dbReference type="IntAct" id="P35240">
    <property type="interactions" value="153"/>
</dbReference>
<dbReference type="MINT" id="P35240"/>
<dbReference type="STRING" id="9606.ENSP00000344666"/>
<dbReference type="CarbonylDB" id="P35240"/>
<dbReference type="GlyGen" id="P35240">
    <property type="glycosylation" value="2 sites, 1 O-linked glycan (1 site)"/>
</dbReference>
<dbReference type="iPTMnet" id="P35240"/>
<dbReference type="PhosphoSitePlus" id="P35240"/>
<dbReference type="BioMuta" id="NF2"/>
<dbReference type="DMDM" id="462594"/>
<dbReference type="CPTAC" id="CPTAC-1739"/>
<dbReference type="jPOST" id="P35240"/>
<dbReference type="MassIVE" id="P35240"/>
<dbReference type="PaxDb" id="9606-ENSP00000344666"/>
<dbReference type="PeptideAtlas" id="P35240"/>
<dbReference type="ProteomicsDB" id="54999">
    <molecule id="P35240-1"/>
</dbReference>
<dbReference type="ProteomicsDB" id="55000">
    <molecule id="P35240-10"/>
</dbReference>
<dbReference type="ProteomicsDB" id="55001">
    <molecule id="P35240-2"/>
</dbReference>
<dbReference type="ProteomicsDB" id="55002">
    <molecule id="P35240-3"/>
</dbReference>
<dbReference type="ProteomicsDB" id="55003">
    <molecule id="P35240-4"/>
</dbReference>
<dbReference type="ProteomicsDB" id="55004">
    <molecule id="P35240-5"/>
</dbReference>
<dbReference type="ProteomicsDB" id="55005">
    <molecule id="P35240-6"/>
</dbReference>
<dbReference type="ProteomicsDB" id="55006">
    <molecule id="P35240-7"/>
</dbReference>
<dbReference type="ProteomicsDB" id="55007">
    <molecule id="P35240-8"/>
</dbReference>
<dbReference type="ProteomicsDB" id="55008">
    <molecule id="P35240-9"/>
</dbReference>
<dbReference type="Pumba" id="P35240"/>
<dbReference type="Antibodypedia" id="319">
    <property type="antibodies" value="678 antibodies from 44 providers"/>
</dbReference>
<dbReference type="DNASU" id="4771"/>
<dbReference type="Ensembl" id="ENST00000334961.11">
    <molecule id="P35240-4"/>
    <property type="protein sequence ID" value="ENSP00000335652.7"/>
    <property type="gene ID" value="ENSG00000186575.20"/>
</dbReference>
<dbReference type="Ensembl" id="ENST00000338641.10">
    <molecule id="P35240-1"/>
    <property type="protein sequence ID" value="ENSP00000344666.5"/>
    <property type="gene ID" value="ENSG00000186575.20"/>
</dbReference>
<dbReference type="Ensembl" id="ENST00000353887.8">
    <molecule id="P35240-4"/>
    <property type="protein sequence ID" value="ENSP00000340626.4"/>
    <property type="gene ID" value="ENSG00000186575.20"/>
</dbReference>
<dbReference type="Ensembl" id="ENST00000361452.8">
    <molecule id="P35240-5"/>
    <property type="protein sequence ID" value="ENSP00000354897.4"/>
    <property type="gene ID" value="ENSG00000186575.20"/>
</dbReference>
<dbReference type="Ensembl" id="ENST00000361676.8">
    <molecule id="P35240-6"/>
    <property type="protein sequence ID" value="ENSP00000355183.4"/>
    <property type="gene ID" value="ENSG00000186575.20"/>
</dbReference>
<dbReference type="Ensembl" id="ENST00000397789.3">
    <molecule id="P35240-3"/>
    <property type="protein sequence ID" value="ENSP00000380891.3"/>
    <property type="gene ID" value="ENSG00000186575.20"/>
</dbReference>
<dbReference type="Ensembl" id="ENST00000403435.5">
    <molecule id="P35240-8"/>
    <property type="protein sequence ID" value="ENSP00000384029.1"/>
    <property type="gene ID" value="ENSG00000186575.20"/>
</dbReference>
<dbReference type="Ensembl" id="ENST00000403999.7">
    <molecule id="P35240-3"/>
    <property type="protein sequence ID" value="ENSP00000384797.3"/>
    <property type="gene ID" value="ENSG00000186575.20"/>
</dbReference>
<dbReference type="Ensembl" id="ENST00000413209.6">
    <molecule id="P35240-9"/>
    <property type="protein sequence ID" value="ENSP00000409921.2"/>
    <property type="gene ID" value="ENSG00000186575.20"/>
</dbReference>
<dbReference type="Ensembl" id="ENST00000432151.5">
    <molecule id="P35240-10"/>
    <property type="protein sequence ID" value="ENSP00000395885.1"/>
    <property type="gene ID" value="ENSG00000186575.20"/>
</dbReference>
<dbReference type="Ensembl" id="ENST00000672461.1">
    <molecule id="P35240-3"/>
    <property type="protein sequence ID" value="ENSP00000500919.1"/>
    <property type="gene ID" value="ENSG00000186575.20"/>
</dbReference>
<dbReference type="Ensembl" id="ENST00000672896.1">
    <molecule id="P35240-3"/>
    <property type="protein sequence ID" value="ENSP00000500117.1"/>
    <property type="gene ID" value="ENSG00000186575.20"/>
</dbReference>
<dbReference type="Ensembl" id="ENST00000713935.1">
    <molecule id="P35240-4"/>
    <property type="protein sequence ID" value="ENSP00000519232.1"/>
    <property type="gene ID" value="ENSG00000186575.20"/>
</dbReference>
<dbReference type="GeneID" id="4771"/>
<dbReference type="KEGG" id="hsa:4771"/>
<dbReference type="MANE-Select" id="ENST00000338641.10">
    <property type="protein sequence ID" value="ENSP00000344666.5"/>
    <property type="RefSeq nucleotide sequence ID" value="NM_000268.4"/>
    <property type="RefSeq protein sequence ID" value="NP_000259.1"/>
</dbReference>
<dbReference type="UCSC" id="uc003afy.5">
    <molecule id="P35240-1"/>
    <property type="organism name" value="human"/>
</dbReference>
<dbReference type="AGR" id="HGNC:7773"/>
<dbReference type="CTD" id="4771"/>
<dbReference type="DisGeNET" id="4771"/>
<dbReference type="GeneCards" id="NF2"/>
<dbReference type="GeneReviews" id="NF2"/>
<dbReference type="HGNC" id="HGNC:7773">
    <property type="gene designation" value="NF2"/>
</dbReference>
<dbReference type="HPA" id="ENSG00000186575">
    <property type="expression patterns" value="Low tissue specificity"/>
</dbReference>
<dbReference type="MalaCards" id="NF2"/>
<dbReference type="MIM" id="101000">
    <property type="type" value="phenotype"/>
</dbReference>
<dbReference type="MIM" id="156240">
    <property type="type" value="phenotype"/>
</dbReference>
<dbReference type="MIM" id="607379">
    <property type="type" value="gene"/>
</dbReference>
<dbReference type="neXtProt" id="NX_P35240"/>
<dbReference type="OpenTargets" id="ENSG00000186575"/>
<dbReference type="Orphanet" id="637">
    <property type="disease" value="Full NF2-related schwannomatosis"/>
</dbReference>
<dbReference type="Orphanet" id="93921">
    <property type="disease" value="Full schwannomatosis"/>
</dbReference>
<dbReference type="Orphanet" id="2495">
    <property type="disease" value="Meningioma"/>
</dbReference>
<dbReference type="Orphanet" id="634475">
    <property type="disease" value="Mosaic NF2-related schwannomatosis"/>
</dbReference>
<dbReference type="PharmGKB" id="PA31580"/>
<dbReference type="VEuPathDB" id="HostDB:ENSG00000186575"/>
<dbReference type="eggNOG" id="KOG3529">
    <property type="taxonomic scope" value="Eukaryota"/>
</dbReference>
<dbReference type="GeneTree" id="ENSGT01020000230354"/>
<dbReference type="HOGENOM" id="CLU_136855_0_0_1"/>
<dbReference type="InParanoid" id="P35240"/>
<dbReference type="OMA" id="PGMLANE"/>
<dbReference type="OrthoDB" id="6018897at2759"/>
<dbReference type="PAN-GO" id="P35240">
    <property type="GO annotations" value="7 GO annotations based on evolutionary models"/>
</dbReference>
<dbReference type="PhylomeDB" id="P35240"/>
<dbReference type="TreeFam" id="TF313935"/>
<dbReference type="PathwayCommons" id="P35240"/>
<dbReference type="Reactome" id="R-HSA-2029482">
    <property type="pathway name" value="Regulation of actin dynamics for phagocytic cup formation"/>
</dbReference>
<dbReference type="Reactome" id="R-HSA-5627123">
    <property type="pathway name" value="RHO GTPases activate PAKs"/>
</dbReference>
<dbReference type="SignaLink" id="P35240"/>
<dbReference type="SIGNOR" id="P35240"/>
<dbReference type="BioGRID-ORCS" id="4771">
    <property type="hits" value="88 hits in 1204 CRISPR screens"/>
</dbReference>
<dbReference type="ChiTaRS" id="NF2">
    <property type="organism name" value="human"/>
</dbReference>
<dbReference type="EvolutionaryTrace" id="P35240"/>
<dbReference type="GeneWiki" id="Merlin_(protein)"/>
<dbReference type="GenomeRNAi" id="4771"/>
<dbReference type="Pharos" id="P35240">
    <property type="development level" value="Tbio"/>
</dbReference>
<dbReference type="PRO" id="PR:P35240"/>
<dbReference type="Proteomes" id="UP000005640">
    <property type="component" value="Chromosome 22"/>
</dbReference>
<dbReference type="RNAct" id="P35240">
    <property type="molecule type" value="protein"/>
</dbReference>
<dbReference type="Bgee" id="ENSG00000186575">
    <property type="expression patterns" value="Expressed in endometrium epithelium and 205 other cell types or tissues"/>
</dbReference>
<dbReference type="ExpressionAtlas" id="P35240">
    <property type="expression patterns" value="baseline and differential"/>
</dbReference>
<dbReference type="GO" id="GO:0005912">
    <property type="term" value="C:adherens junction"/>
    <property type="evidence" value="ECO:0000318"/>
    <property type="project" value="GO_Central"/>
</dbReference>
<dbReference type="GO" id="GO:0045177">
    <property type="term" value="C:apical part of cell"/>
    <property type="evidence" value="ECO:0000318"/>
    <property type="project" value="GO_Central"/>
</dbReference>
<dbReference type="GO" id="GO:0044297">
    <property type="term" value="C:cell body"/>
    <property type="evidence" value="ECO:0007669"/>
    <property type="project" value="Ensembl"/>
</dbReference>
<dbReference type="GO" id="GO:0032154">
    <property type="term" value="C:cleavage furrow"/>
    <property type="evidence" value="ECO:0007669"/>
    <property type="project" value="Ensembl"/>
</dbReference>
<dbReference type="GO" id="GO:0030864">
    <property type="term" value="C:cortical actin cytoskeleton"/>
    <property type="evidence" value="ECO:0007669"/>
    <property type="project" value="Ensembl"/>
</dbReference>
<dbReference type="GO" id="GO:0005737">
    <property type="term" value="C:cytoplasm"/>
    <property type="evidence" value="ECO:0000314"/>
    <property type="project" value="HGNC-UCL"/>
</dbReference>
<dbReference type="GO" id="GO:0005856">
    <property type="term" value="C:cytoskeleton"/>
    <property type="evidence" value="ECO:0000304"/>
    <property type="project" value="ProtInc"/>
</dbReference>
<dbReference type="GO" id="GO:0005829">
    <property type="term" value="C:cytosol"/>
    <property type="evidence" value="ECO:0000314"/>
    <property type="project" value="HPA"/>
</dbReference>
<dbReference type="GO" id="GO:0005769">
    <property type="term" value="C:early endosome"/>
    <property type="evidence" value="ECO:0000314"/>
    <property type="project" value="HGNC-UCL"/>
</dbReference>
<dbReference type="GO" id="GO:0030175">
    <property type="term" value="C:filopodium"/>
    <property type="evidence" value="ECO:0000318"/>
    <property type="project" value="GO_Central"/>
</dbReference>
<dbReference type="GO" id="GO:0031527">
    <property type="term" value="C:filopodium membrane"/>
    <property type="evidence" value="ECO:0007669"/>
    <property type="project" value="UniProtKB-SubCell"/>
</dbReference>
<dbReference type="GO" id="GO:0030027">
    <property type="term" value="C:lamellipodium"/>
    <property type="evidence" value="ECO:0007669"/>
    <property type="project" value="Ensembl"/>
</dbReference>
<dbReference type="GO" id="GO:0016020">
    <property type="term" value="C:membrane"/>
    <property type="evidence" value="ECO:0007005"/>
    <property type="project" value="UniProtKB"/>
</dbReference>
<dbReference type="GO" id="GO:0043005">
    <property type="term" value="C:neuron projection"/>
    <property type="evidence" value="ECO:0007669"/>
    <property type="project" value="Ensembl"/>
</dbReference>
<dbReference type="GO" id="GO:0005730">
    <property type="term" value="C:nucleolus"/>
    <property type="evidence" value="ECO:0000314"/>
    <property type="project" value="HGNC-UCL"/>
</dbReference>
<dbReference type="GO" id="GO:0005634">
    <property type="term" value="C:nucleus"/>
    <property type="evidence" value="ECO:0000314"/>
    <property type="project" value="UniProtKB"/>
</dbReference>
<dbReference type="GO" id="GO:0048471">
    <property type="term" value="C:perinuclear region of cytoplasm"/>
    <property type="evidence" value="ECO:0000314"/>
    <property type="project" value="HGNC-UCL"/>
</dbReference>
<dbReference type="GO" id="GO:0005886">
    <property type="term" value="C:plasma membrane"/>
    <property type="evidence" value="ECO:0000314"/>
    <property type="project" value="HPA"/>
</dbReference>
<dbReference type="GO" id="GO:0032587">
    <property type="term" value="C:ruffle membrane"/>
    <property type="evidence" value="ECO:0007669"/>
    <property type="project" value="UniProtKB-SubCell"/>
</dbReference>
<dbReference type="GO" id="GO:0003779">
    <property type="term" value="F:actin binding"/>
    <property type="evidence" value="ECO:0000318"/>
    <property type="project" value="GO_Central"/>
</dbReference>
<dbReference type="GO" id="GO:0005178">
    <property type="term" value="F:integrin binding"/>
    <property type="evidence" value="ECO:0000318"/>
    <property type="project" value="GO_Central"/>
</dbReference>
<dbReference type="GO" id="GO:0030036">
    <property type="term" value="P:actin cytoskeleton organization"/>
    <property type="evidence" value="ECO:0000315"/>
    <property type="project" value="HGNC-UCL"/>
</dbReference>
<dbReference type="GO" id="GO:0045216">
    <property type="term" value="P:cell-cell junction organization"/>
    <property type="evidence" value="ECO:0007669"/>
    <property type="project" value="Ensembl"/>
</dbReference>
<dbReference type="GO" id="GO:0007398">
    <property type="term" value="P:ectoderm development"/>
    <property type="evidence" value="ECO:0007669"/>
    <property type="project" value="Ensembl"/>
</dbReference>
<dbReference type="GO" id="GO:0021766">
    <property type="term" value="P:hippocampus development"/>
    <property type="evidence" value="ECO:0007669"/>
    <property type="project" value="Ensembl"/>
</dbReference>
<dbReference type="GO" id="GO:0070306">
    <property type="term" value="P:lens fiber cell differentiation"/>
    <property type="evidence" value="ECO:0007669"/>
    <property type="project" value="Ensembl"/>
</dbReference>
<dbReference type="GO" id="GO:0000165">
    <property type="term" value="P:MAPK cascade"/>
    <property type="evidence" value="ECO:0007669"/>
    <property type="project" value="Ensembl"/>
</dbReference>
<dbReference type="GO" id="GO:0001707">
    <property type="term" value="P:mesoderm formation"/>
    <property type="evidence" value="ECO:0007669"/>
    <property type="project" value="Ensembl"/>
</dbReference>
<dbReference type="GO" id="GO:0030336">
    <property type="term" value="P:negative regulation of cell migration"/>
    <property type="evidence" value="ECO:0000304"/>
    <property type="project" value="HGNC-UCL"/>
</dbReference>
<dbReference type="GO" id="GO:0008285">
    <property type="term" value="P:negative regulation of cell population proliferation"/>
    <property type="evidence" value="ECO:0000314"/>
    <property type="project" value="UniProtKB"/>
</dbReference>
<dbReference type="GO" id="GO:0022408">
    <property type="term" value="P:negative regulation of cell-cell adhesion"/>
    <property type="evidence" value="ECO:0000314"/>
    <property type="project" value="HGNC-UCL"/>
</dbReference>
<dbReference type="GO" id="GO:0001953">
    <property type="term" value="P:negative regulation of cell-matrix adhesion"/>
    <property type="evidence" value="ECO:0000304"/>
    <property type="project" value="HGNC-UCL"/>
</dbReference>
<dbReference type="GO" id="GO:0043409">
    <property type="term" value="P:negative regulation of MAPK cascade"/>
    <property type="evidence" value="ECO:0007669"/>
    <property type="project" value="Ensembl"/>
</dbReference>
<dbReference type="GO" id="GO:0033689">
    <property type="term" value="P:negative regulation of osteoblast proliferation"/>
    <property type="evidence" value="ECO:0007669"/>
    <property type="project" value="Ensembl"/>
</dbReference>
<dbReference type="GO" id="GO:0046426">
    <property type="term" value="P:negative regulation of receptor signaling pathway via JAK-STAT"/>
    <property type="evidence" value="ECO:0000314"/>
    <property type="project" value="HGNC-UCL"/>
</dbReference>
<dbReference type="GO" id="GO:0010626">
    <property type="term" value="P:negative regulation of Schwann cell proliferation"/>
    <property type="evidence" value="ECO:0007669"/>
    <property type="project" value="Ensembl"/>
</dbReference>
<dbReference type="GO" id="GO:0042475">
    <property type="term" value="P:odontogenesis of dentin-containing tooth"/>
    <property type="evidence" value="ECO:0007669"/>
    <property type="project" value="Ensembl"/>
</dbReference>
<dbReference type="GO" id="GO:0033687">
    <property type="term" value="P:osteoblast proliferation"/>
    <property type="evidence" value="ECO:0007669"/>
    <property type="project" value="Ensembl"/>
</dbReference>
<dbReference type="GO" id="GO:0045597">
    <property type="term" value="P:positive regulation of cell differentiation"/>
    <property type="evidence" value="ECO:0007669"/>
    <property type="project" value="Ensembl"/>
</dbReference>
<dbReference type="GO" id="GO:2000643">
    <property type="term" value="P:positive regulation of early endosome to late endosome transport"/>
    <property type="evidence" value="ECO:0000318"/>
    <property type="project" value="GO_Central"/>
</dbReference>
<dbReference type="GO" id="GO:1902966">
    <property type="term" value="P:positive regulation of protein localization to early endosome"/>
    <property type="evidence" value="ECO:0000318"/>
    <property type="project" value="GO_Central"/>
</dbReference>
<dbReference type="GO" id="GO:0051496">
    <property type="term" value="P:positive regulation of stress fiber assembly"/>
    <property type="evidence" value="ECO:0000315"/>
    <property type="project" value="HGNC-UCL"/>
</dbReference>
<dbReference type="GO" id="GO:0042981">
    <property type="term" value="P:regulation of apoptotic process"/>
    <property type="evidence" value="ECO:0000315"/>
    <property type="project" value="UniProtKB"/>
</dbReference>
<dbReference type="GO" id="GO:0051726">
    <property type="term" value="P:regulation of cell cycle"/>
    <property type="evidence" value="ECO:0000315"/>
    <property type="project" value="UniProtKB"/>
</dbReference>
<dbReference type="GO" id="GO:0008360">
    <property type="term" value="P:regulation of cell shape"/>
    <property type="evidence" value="ECO:0000318"/>
    <property type="project" value="GO_Central"/>
</dbReference>
<dbReference type="GO" id="GO:0014013">
    <property type="term" value="P:regulation of gliogenesis"/>
    <property type="evidence" value="ECO:0000318"/>
    <property type="project" value="GO_Central"/>
</dbReference>
<dbReference type="GO" id="GO:0035330">
    <property type="term" value="P:regulation of hippo signaling"/>
    <property type="evidence" value="ECO:0000315"/>
    <property type="project" value="UniProtKB"/>
</dbReference>
<dbReference type="GO" id="GO:2000177">
    <property type="term" value="P:regulation of neural precursor cell proliferation"/>
    <property type="evidence" value="ECO:0007669"/>
    <property type="project" value="Ensembl"/>
</dbReference>
<dbReference type="GO" id="GO:1902115">
    <property type="term" value="P:regulation of organelle assembly"/>
    <property type="evidence" value="ECO:0000318"/>
    <property type="project" value="GO_Central"/>
</dbReference>
<dbReference type="GO" id="GO:1900180">
    <property type="term" value="P:regulation of protein localization to nucleus"/>
    <property type="evidence" value="ECO:0007669"/>
    <property type="project" value="Ensembl"/>
</dbReference>
<dbReference type="GO" id="GO:0031647">
    <property type="term" value="P:regulation of protein stability"/>
    <property type="evidence" value="ECO:0007669"/>
    <property type="project" value="Ensembl"/>
</dbReference>
<dbReference type="GO" id="GO:0072091">
    <property type="term" value="P:regulation of stem cell proliferation"/>
    <property type="evidence" value="ECO:0007669"/>
    <property type="project" value="Ensembl"/>
</dbReference>
<dbReference type="GO" id="GO:0014010">
    <property type="term" value="P:Schwann cell proliferation"/>
    <property type="evidence" value="ECO:0000315"/>
    <property type="project" value="HGNC-UCL"/>
</dbReference>
<dbReference type="CDD" id="cd14473">
    <property type="entry name" value="FERM_B-lobe"/>
    <property type="match status" value="1"/>
</dbReference>
<dbReference type="CDD" id="cd13194">
    <property type="entry name" value="FERM_C_ERM"/>
    <property type="match status" value="1"/>
</dbReference>
<dbReference type="CDD" id="cd17186">
    <property type="entry name" value="FERM_F1_Merlin"/>
    <property type="match status" value="1"/>
</dbReference>
<dbReference type="FunFam" id="3.10.20.90:FF:000103">
    <property type="entry name" value="Merlin isoform 2"/>
    <property type="match status" value="1"/>
</dbReference>
<dbReference type="FunFam" id="2.30.29.30:FF:000003">
    <property type="entry name" value="Radixin isoform 1"/>
    <property type="match status" value="1"/>
</dbReference>
<dbReference type="FunFam" id="1.20.80.10:FF:000002">
    <property type="entry name" value="radixin isoform X1"/>
    <property type="match status" value="1"/>
</dbReference>
<dbReference type="FunFam" id="1.20.5.450:FF:000001">
    <property type="entry name" value="radixin isoform X2"/>
    <property type="match status" value="1"/>
</dbReference>
<dbReference type="Gene3D" id="1.20.5.450">
    <property type="match status" value="1"/>
</dbReference>
<dbReference type="Gene3D" id="1.20.80.10">
    <property type="match status" value="1"/>
</dbReference>
<dbReference type="Gene3D" id="6.10.360.10">
    <property type="match status" value="1"/>
</dbReference>
<dbReference type="Gene3D" id="3.10.20.90">
    <property type="entry name" value="Phosphatidylinositol 3-kinase Catalytic Subunit, Chain A, domain 1"/>
    <property type="match status" value="1"/>
</dbReference>
<dbReference type="Gene3D" id="2.30.29.30">
    <property type="entry name" value="Pleckstrin-homology domain (PH domain)/Phosphotyrosine-binding domain (PTB)"/>
    <property type="match status" value="1"/>
</dbReference>
<dbReference type="InterPro" id="IPR019749">
    <property type="entry name" value="Band_41_domain"/>
</dbReference>
<dbReference type="InterPro" id="IPR011174">
    <property type="entry name" value="ERM"/>
</dbReference>
<dbReference type="InterPro" id="IPR011259">
    <property type="entry name" value="ERM_C_dom"/>
</dbReference>
<dbReference type="InterPro" id="IPR041789">
    <property type="entry name" value="ERM_FERM_C"/>
</dbReference>
<dbReference type="InterPro" id="IPR046810">
    <property type="entry name" value="ERM_helical"/>
</dbReference>
<dbReference type="InterPro" id="IPR000798">
    <property type="entry name" value="Ez/rad/moesin-like"/>
</dbReference>
<dbReference type="InterPro" id="IPR014352">
    <property type="entry name" value="FERM/acyl-CoA-bd_prot_sf"/>
</dbReference>
<dbReference type="InterPro" id="IPR035963">
    <property type="entry name" value="FERM_2"/>
</dbReference>
<dbReference type="InterPro" id="IPR019748">
    <property type="entry name" value="FERM_central"/>
</dbReference>
<dbReference type="InterPro" id="IPR019747">
    <property type="entry name" value="FERM_CS"/>
</dbReference>
<dbReference type="InterPro" id="IPR000299">
    <property type="entry name" value="FERM_domain"/>
</dbReference>
<dbReference type="InterPro" id="IPR018979">
    <property type="entry name" value="FERM_N"/>
</dbReference>
<dbReference type="InterPro" id="IPR018980">
    <property type="entry name" value="FERM_PH-like_C"/>
</dbReference>
<dbReference type="InterPro" id="IPR008954">
    <property type="entry name" value="Moesin_tail_sf"/>
</dbReference>
<dbReference type="InterPro" id="IPR011993">
    <property type="entry name" value="PH-like_dom_sf"/>
</dbReference>
<dbReference type="InterPro" id="IPR029071">
    <property type="entry name" value="Ubiquitin-like_domsf"/>
</dbReference>
<dbReference type="PANTHER" id="PTHR23281">
    <property type="entry name" value="MERLIN/MOESIN/EZRIN/RADIXIN"/>
    <property type="match status" value="1"/>
</dbReference>
<dbReference type="Pfam" id="PF00769">
    <property type="entry name" value="ERM_C"/>
    <property type="match status" value="1"/>
</dbReference>
<dbReference type="Pfam" id="PF20492">
    <property type="entry name" value="ERM_helical"/>
    <property type="match status" value="1"/>
</dbReference>
<dbReference type="Pfam" id="PF09380">
    <property type="entry name" value="FERM_C"/>
    <property type="match status" value="1"/>
</dbReference>
<dbReference type="Pfam" id="PF00373">
    <property type="entry name" value="FERM_M"/>
    <property type="match status" value="1"/>
</dbReference>
<dbReference type="Pfam" id="PF09379">
    <property type="entry name" value="FERM_N"/>
    <property type="match status" value="1"/>
</dbReference>
<dbReference type="PIRSF" id="PIRSF002305">
    <property type="entry name" value="ERM"/>
    <property type="match status" value="1"/>
</dbReference>
<dbReference type="PRINTS" id="PR00935">
    <property type="entry name" value="BAND41"/>
</dbReference>
<dbReference type="PRINTS" id="PR00661">
    <property type="entry name" value="ERMFAMILY"/>
</dbReference>
<dbReference type="SMART" id="SM00295">
    <property type="entry name" value="B41"/>
    <property type="match status" value="1"/>
</dbReference>
<dbReference type="SMART" id="SM01196">
    <property type="entry name" value="FERM_C"/>
    <property type="match status" value="1"/>
</dbReference>
<dbReference type="SUPFAM" id="SSF48678">
    <property type="entry name" value="Moesin tail domain"/>
    <property type="match status" value="1"/>
</dbReference>
<dbReference type="SUPFAM" id="SSF50729">
    <property type="entry name" value="PH domain-like"/>
    <property type="match status" value="1"/>
</dbReference>
<dbReference type="SUPFAM" id="SSF47031">
    <property type="entry name" value="Second domain of FERM"/>
    <property type="match status" value="1"/>
</dbReference>
<dbReference type="SUPFAM" id="SSF54236">
    <property type="entry name" value="Ubiquitin-like"/>
    <property type="match status" value="1"/>
</dbReference>
<dbReference type="PROSITE" id="PS00660">
    <property type="entry name" value="FERM_1"/>
    <property type="match status" value="1"/>
</dbReference>
<dbReference type="PROSITE" id="PS00661">
    <property type="entry name" value="FERM_2"/>
    <property type="match status" value="1"/>
</dbReference>
<dbReference type="PROSITE" id="PS50057">
    <property type="entry name" value="FERM_3"/>
    <property type="match status" value="1"/>
</dbReference>
<keyword id="KW-0002">3D-structure</keyword>
<keyword id="KW-0025">Alternative splicing</keyword>
<keyword id="KW-1003">Cell membrane</keyword>
<keyword id="KW-0966">Cell projection</keyword>
<keyword id="KW-0963">Cytoplasm</keyword>
<keyword id="KW-0206">Cytoskeleton</keyword>
<keyword id="KW-0209">Deafness</keyword>
<keyword id="KW-0225">Disease variant</keyword>
<keyword id="KW-0472">Membrane</keyword>
<keyword id="KW-0539">Nucleus</keyword>
<keyword id="KW-0597">Phosphoprotein</keyword>
<keyword id="KW-1267">Proteomics identification</keyword>
<keyword id="KW-1185">Reference proteome</keyword>
<keyword id="KW-0043">Tumor suppressor</keyword>
<keyword id="KW-0832">Ubl conjugation</keyword>
<accession>P35240</accession>
<accession>O95683</accession>
<accession>Q8WUJ2</accession>
<accession>Q969N0</accession>
<accession>Q969Q3</accession>
<accession>Q96T30</accession>
<accession>Q96T31</accession>
<accession>Q96T32</accession>
<accession>Q96T33</accession>
<accession>Q9BTW3</accession>
<accession>Q9UNG9</accession>
<accession>Q9UNH3</accession>
<accession>Q9UNH4</accession>
<protein>
    <recommendedName>
        <fullName>Merlin</fullName>
    </recommendedName>
    <alternativeName>
        <fullName>Moesin-ezrin-radixin-like protein</fullName>
    </alternativeName>
    <alternativeName>
        <fullName>Neurofibromin-2</fullName>
    </alternativeName>
    <alternativeName>
        <fullName>Schwannomerlin</fullName>
    </alternativeName>
    <alternativeName>
        <fullName>Schwannomin</fullName>
    </alternativeName>
</protein>
<name>MERL_HUMAN</name>